<name>DNM1L_HUMAN</name>
<accession>O00429</accession>
<accession>A8K4X9</accession>
<accession>B4DGC9</accession>
<accession>B4DSU8</accession>
<accession>G8JLD5</accession>
<accession>J3KPI2</accession>
<accession>O14541</accession>
<accession>O60709</accession>
<accession>Q59GN9</accession>
<accession>Q7L6B3</accession>
<accession>Q8TBT7</accession>
<accession>Q9BWM1</accession>
<accession>Q9Y5J2</accession>
<sequence length="736" mass="81877">MEALIPVINKLQDVFNTVGADIIQLPQIVVVGTQSSGKSSVLESLVGRDLLPRGTGIVTRRPLILQLVHVSQEDKRKTTGEENGVEAEEWGKFLHTKNKLYTDFDEIRQEIENETERISGNNKGVSPEPIHLKIFSPNVVNLTLVDLPGMTKVPVGDQPKDIELQIRELILRFISNPNSIILAVTAANTDMATSEALKISREVDPDGRRTLAVITKLDLMDAGTDAMDVLMGRVIPVKLGIIGVVNRSQLDINNKKSVTDSIRDEYAFLQKKYPSLANRNGTKYLARTLNRLLMHHIRDCLPELKTRINVLAAQYQSLLNSYGEPVDDKSATLLQLITKFATEYCNTIEGTAKYIETSELCGGARICYIFHETFGRTLESVDPLGGLNTIDILTAIRNATGPRPALFVPEVSFELLVKRQIKRLEEPSLRCVELVHEEMQRIIQHCSNYSTQELLRFPKLHDAIVEVVTCLLRKRLPVTNEMVHNLVAIELAYINTKHPDFADACGLMNNNIEEQRRNRLARELPSAVSRDKSSKVPSALAPASQEPSPAASAEADGKLIQDSRRETKNVASGGGGVGDGVQEPTTGNWRGMLKTSKAEELLAEEKSKPIPIMPASPQKGHAVNLLDVPVPVARKLSAREQRDCEVIERLIKSYFLIVRKNIQDSVPKAVMHFLVNHVKDTLQSELVGQLYKSSLLDDLLTESEDMAQRRKEAADMLKALQGASQIIAEIRETHLW</sequence>
<keyword id="KW-0002">3D-structure</keyword>
<keyword id="KW-0007">Acetylation</keyword>
<keyword id="KW-0025">Alternative splicing</keyword>
<keyword id="KW-0090">Biological rhythms</keyword>
<keyword id="KW-0168">Coated pit</keyword>
<keyword id="KW-0963">Cytoplasm</keyword>
<keyword id="KW-0968">Cytoplasmic vesicle</keyword>
<keyword id="KW-0225">Disease variant</keyword>
<keyword id="KW-0254">Endocytosis</keyword>
<keyword id="KW-0325">Glycoprotein</keyword>
<keyword id="KW-0333">Golgi apparatus</keyword>
<keyword id="KW-0342">GTP-binding</keyword>
<keyword id="KW-0378">Hydrolase</keyword>
<keyword id="KW-1017">Isopeptide bond</keyword>
<keyword id="KW-0446">Lipid-binding</keyword>
<keyword id="KW-0472">Membrane</keyword>
<keyword id="KW-0496">Mitochondrion</keyword>
<keyword id="KW-1000">Mitochondrion outer membrane</keyword>
<keyword id="KW-1210">Necrosis</keyword>
<keyword id="KW-0547">Nucleotide-binding</keyword>
<keyword id="KW-0576">Peroxisome</keyword>
<keyword id="KW-0597">Phosphoprotein</keyword>
<keyword id="KW-1267">Proteomics identification</keyword>
<keyword id="KW-1185">Reference proteome</keyword>
<keyword id="KW-0702">S-nitrosylation</keyword>
<keyword id="KW-0770">Synapse</keyword>
<keyword id="KW-0832">Ubl conjugation</keyword>
<proteinExistence type="evidence at protein level"/>
<feature type="chain" id="PRO_0000206566" description="Dynamin-1-like protein">
    <location>
        <begin position="1"/>
        <end position="736"/>
    </location>
</feature>
<feature type="domain" description="Dynamin-type G" evidence="5">
    <location>
        <begin position="22"/>
        <end position="302"/>
    </location>
</feature>
<feature type="domain" description="GED" evidence="4">
    <location>
        <begin position="644"/>
        <end position="735"/>
    </location>
</feature>
<feature type="region of interest" description="G1 motif" evidence="5">
    <location>
        <begin position="32"/>
        <end position="39"/>
    </location>
</feature>
<feature type="region of interest" description="G2 motif" evidence="5">
    <location>
        <begin position="58"/>
        <end position="60"/>
    </location>
</feature>
<feature type="region of interest" description="G3 motif" evidence="5">
    <location>
        <begin position="146"/>
        <end position="149"/>
    </location>
</feature>
<feature type="region of interest" description="G4 motif" evidence="5">
    <location>
        <begin position="215"/>
        <end position="218"/>
    </location>
</feature>
<feature type="region of interest" description="G5 motif" evidence="5">
    <location>
        <begin position="245"/>
        <end position="248"/>
    </location>
</feature>
<feature type="region of interest" description="Middle domain" evidence="11">
    <location>
        <begin position="344"/>
        <end position="489"/>
    </location>
</feature>
<feature type="region of interest" description="Interaction with GSK3B" evidence="53">
    <location>
        <begin position="448"/>
        <end position="685"/>
    </location>
</feature>
<feature type="region of interest" description="B domain" evidence="11">
    <location>
        <begin position="502"/>
        <end position="569"/>
    </location>
</feature>
<feature type="region of interest" description="Disordered" evidence="6">
    <location>
        <begin position="523"/>
        <end position="590"/>
    </location>
</feature>
<feature type="region of interest" description="Important for homodimerization" evidence="32">
    <location>
        <begin position="654"/>
        <end position="668"/>
    </location>
</feature>
<feature type="compositionally biased region" description="Low complexity" evidence="6">
    <location>
        <begin position="537"/>
        <end position="554"/>
    </location>
</feature>
<feature type="compositionally biased region" description="Basic and acidic residues" evidence="6">
    <location>
        <begin position="555"/>
        <end position="568"/>
    </location>
</feature>
<feature type="binding site" evidence="61">
    <location>
        <begin position="32"/>
        <end position="40"/>
    </location>
    <ligand>
        <name>GTP</name>
        <dbReference type="ChEBI" id="CHEBI:37565"/>
    </ligand>
</feature>
<feature type="binding site" evidence="61">
    <location>
        <begin position="215"/>
        <end position="221"/>
    </location>
    <ligand>
        <name>GTP</name>
        <dbReference type="ChEBI" id="CHEBI:37565"/>
    </ligand>
</feature>
<feature type="binding site" evidence="61">
    <location>
        <begin position="246"/>
        <end position="249"/>
    </location>
    <ligand>
        <name>GTP</name>
        <dbReference type="ChEBI" id="CHEBI:37565"/>
    </ligand>
</feature>
<feature type="modified residue" description="N-acetylmethionine" evidence="66 70">
    <location>
        <position position="1"/>
    </location>
</feature>
<feature type="modified residue" description="Phosphoserine" evidence="71">
    <location>
        <position position="529"/>
    </location>
</feature>
<feature type="modified residue" description="Phosphoserine" evidence="65">
    <location>
        <position position="548"/>
    </location>
</feature>
<feature type="modified residue" description="N6-acetyllysine; alternate" evidence="3">
    <location>
        <position position="597"/>
    </location>
</feature>
<feature type="modified residue" description="Phosphoserine" evidence="65">
    <location>
        <position position="607"/>
    </location>
</feature>
<feature type="modified residue" description="Phosphoserine; by CDK1 and PINK1" evidence="20 28 36 47 64 65 67 68 69 71 72">
    <location>
        <position position="616"/>
    </location>
</feature>
<feature type="modified residue" description="Phosphoserine; by CAMK1 and PKA" evidence="17 19 20 30 36 46">
    <location>
        <position position="637"/>
    </location>
</feature>
<feature type="modified residue" description="S-nitrosocysteine" evidence="21">
    <location>
        <position position="644"/>
    </location>
</feature>
<feature type="glycosylation site" description="O-linked (GlcNAc) threonine" evidence="1">
    <location>
        <position position="585"/>
    </location>
</feature>
<feature type="glycosylation site" description="O-linked (GlcNAc) threonine" evidence="1">
    <location>
        <position position="586"/>
    </location>
</feature>
<feature type="cross-link" description="Glycyl lysine isopeptide (Lys-Gly) (interchain with G-Cter in SUMO)" evidence="24">
    <location>
        <position position="532"/>
    </location>
</feature>
<feature type="cross-link" description="Glycyl lysine isopeptide (Lys-Gly) (interchain with G-Cter in SUMO)" evidence="24">
    <location>
        <position position="535"/>
    </location>
</feature>
<feature type="cross-link" description="Glycyl lysine isopeptide (Lys-Gly) (interchain with G-Cter in SUMO)" evidence="24">
    <location>
        <position position="558"/>
    </location>
</feature>
<feature type="cross-link" description="Glycyl lysine isopeptide (Lys-Gly) (interchain with G-Cter in SUMO)" evidence="24">
    <location>
        <position position="568"/>
    </location>
</feature>
<feature type="cross-link" description="Glycyl lysine isopeptide (Lys-Gly) (interchain with G-Cter in SUMO)" evidence="24">
    <location>
        <position position="594"/>
    </location>
</feature>
<feature type="cross-link" description="Glycyl lysine isopeptide (Lys-Gly) (interchain with G-Cter in SUMO); alternate">
    <location>
        <position position="597"/>
    </location>
</feature>
<feature type="cross-link" description="Glycyl lysine isopeptide (Lys-Gly) (interchain with G-Cter in SUMO)" evidence="24">
    <location>
        <position position="606"/>
    </location>
</feature>
<feature type="cross-link" description="Glycyl lysine isopeptide (Lys-Gly) (interchain with G-Cter in SUMO)" evidence="24">
    <location>
        <position position="608"/>
    </location>
</feature>
<feature type="splice variant" id="VSP_054544" description="In isoform 7." evidence="56">
    <original>MEALIPVINKLQDVFNTVGADIIQLPQIVVVGTQSSGKSSVLE</original>
    <variation>MFHKKINGKQQEKKMTLLHGKTQDTFLKGWKQKNGVNFFTPKI</variation>
    <location>
        <begin position="1"/>
        <end position="43"/>
    </location>
</feature>
<feature type="splice variant" id="VSP_054545" description="In isoform 7." evidence="56">
    <location>
        <begin position="44"/>
        <end position="246"/>
    </location>
</feature>
<feature type="splice variant" id="VSP_039097" description="In isoform 6, isoform 8 and isoform 9." evidence="56 59">
    <original>N</original>
    <variation>NDPATWKNSRHLSK</variation>
    <location>
        <position position="83"/>
    </location>
</feature>
<feature type="splice variant" id="VSP_013685" description="In isoform 3 and isoform 9." evidence="55 56 58">
    <location>
        <begin position="533"/>
        <end position="569"/>
    </location>
</feature>
<feature type="splice variant" id="VSP_013686" description="In isoform 2." evidence="57">
    <location>
        <begin position="533"/>
        <end position="558"/>
    </location>
</feature>
<feature type="splice variant" id="VSP_013687" description="In isoform 5." evidence="55">
    <location>
        <begin position="544"/>
        <end position="569"/>
    </location>
</feature>
<feature type="splice variant" id="VSP_013688" description="In isoform 4 and isoform 8." evidence="55 59">
    <location>
        <begin position="559"/>
        <end position="569"/>
    </location>
</feature>
<feature type="sequence variant" id="VAR_080869" description="In OPA5; changed localization to mitochondrion; impaired mitochondrial membrane fission; dbSNP:rs1555229948." evidence="43">
    <original>E</original>
    <variation>A</variation>
    <location>
        <position position="2"/>
    </location>
</feature>
<feature type="sequence variant" id="VAR_080870" description="In EMPF1; autosomal recessive; impaired mitochondrial membrane fission; hypomorphic mutation retaining partial activity in mitochondrial membrane fission; dbSNP:rs879255688." evidence="42">
    <original>S</original>
    <variation>G</variation>
    <location>
        <position position="36"/>
    </location>
</feature>
<feature type="sequence variant" id="VAR_022446" description="In dbSNP:rs1064610." evidence="7 52 53">
    <original>S</original>
    <variation>T</variation>
    <location>
        <position position="71"/>
    </location>
</feature>
<feature type="sequence variant" id="VAR_080871" description="In OPA5; changed localization to mitochondrion; impaired mitochondrial membrane fission; dbSNP:rs1555119216." evidence="43">
    <original>A</original>
    <variation>E</variation>
    <location>
        <position position="192"/>
    </location>
</feature>
<feature type="sequence variant" id="VAR_076316" description="In EMPF1; uncertain significance; unable to associate with MIEF2 into filaments forming the tubular structures that wrap around the scission site; presence of concentric cristae and/or increased dense granules in some mitochondria; dbSNP:rs879255685." evidence="37 45">
    <original>G</original>
    <variation>D</variation>
    <location>
        <position position="362"/>
    </location>
</feature>
<feature type="sequence variant" id="VAR_076317" description="In EMPF1; the mutation acts in a dominant-negative manner; defects observed in mitochondrial fission; significant decrease in mitochondrial respiratory chain complex IV activity; dbSNP:rs886037861." evidence="38">
    <original>G</original>
    <variation>S</variation>
    <location>
        <position position="362"/>
    </location>
</feature>
<feature type="sequence variant" id="VAR_063704" description="In EMPF1; the mutation acts in a dominant-negative manner; defects observed in both mitochondrial and peroxisomal fission; reduced oligomerization, decreased mitochondrial recruitment; dbSNP:rs121908531." evidence="16 39">
    <original>A</original>
    <variation>D</variation>
    <location>
        <position position="395"/>
    </location>
</feature>
<feature type="sequence variant" id="VAR_076318" description="In EMPF1; the mutation acts in a dominant-negative manner; reduced oligomerization; decreased mitochondrial recruitment; defects observed in mitochondrial fission; dbSNP:rs863223953." evidence="39">
    <original>R</original>
    <variation>C</variation>
    <location>
        <position position="403"/>
    </location>
</feature>
<feature type="sequence variant" id="VAR_080872" description="In EMPF1; impaired mitochondrial and peroxisomal membrane fission." evidence="41">
    <original>L</original>
    <variation>S</variation>
    <location>
        <position position="406"/>
    </location>
</feature>
<feature type="sequence variant" id="VAR_030489" description="In dbSNP:rs2389105.">
    <original>E</original>
    <variation>D</variation>
    <location>
        <position position="426"/>
    </location>
</feature>
<feature type="mutagenesis site" description="Abolishes GTP hydrolysis." evidence="35">
    <original>Q</original>
    <variation>A</variation>
    <location>
        <position position="34"/>
    </location>
</feature>
<feature type="mutagenesis site" description="Loss of GTPase activity. Impairs mitochondrial division and induces changes in peroxisome morphology. No effect on oligomerization. Increase in sumoylation by SUMO3." evidence="8 9 11 24 35 46 52">
    <original>K</original>
    <variation>A</variation>
    <location>
        <position position="38"/>
    </location>
</feature>
<feature type="mutagenesis site" description="Overexpression delays protein secretion. Rescues fragmented or truncated mitochondria in PRKN- or PINK1-depleted cells." evidence="8 9 11 24 35 52">
    <original>K</original>
    <variation>E</variation>
    <location>
        <position position="38"/>
    </location>
</feature>
<feature type="mutagenesis site" description="Abolishes GTP hydrolysis." evidence="10 35 50">
    <original>S</original>
    <variation>A</variation>
    <location>
        <position position="39"/>
    </location>
</feature>
<feature type="mutagenesis site" description="Decreased localization to the perinuclear region." evidence="10 35 50">
    <original>S</original>
    <variation>I</variation>
    <location>
        <position position="39"/>
    </location>
</feature>
<feature type="mutagenesis site" description="Reduces peroxisomal abundance." evidence="10 35 50">
    <original>S</original>
    <variation>N</variation>
    <location>
        <position position="39"/>
    </location>
</feature>
<feature type="mutagenesis site" description="Temperature-sensitive. Impairs mitochondrial division." evidence="8">
    <original>V</original>
    <variation>F</variation>
    <location>
        <position position="41"/>
    </location>
</feature>
<feature type="mutagenesis site" description="Abolishes GTP hydrolysis. Impairs mitochondrial division. Reduces peroxisomal abundance." evidence="8 10 35">
    <original>T</original>
    <variation>A</variation>
    <location>
        <position position="59"/>
    </location>
</feature>
<feature type="mutagenesis site" description="Abolishes GTP hydrolysis." evidence="35">
    <original>D</original>
    <variation>A</variation>
    <location>
        <position position="146"/>
    </location>
</feature>
<feature type="mutagenesis site" description="Abolishes GTP hydrolysis." evidence="35">
    <original>G</original>
    <variation>A</variation>
    <location>
        <position position="149"/>
    </location>
</feature>
<feature type="mutagenesis site" description="Unable to homooligomerize. Unable to associate with MIEF2 into filaments forming the tubular structures that wrap around the scission site." evidence="45">
    <original>D</original>
    <variation>A</variation>
    <location>
        <position position="190"/>
    </location>
</feature>
<feature type="mutagenesis site" description="Abolishes GTP hydrolysis." evidence="35">
    <original>K</original>
    <variation>A</variation>
    <location>
        <position position="216"/>
    </location>
</feature>
<feature type="mutagenesis site" description="Abolishes GTP hydrolysis." evidence="35">
    <original>D</original>
    <variation>A</variation>
    <location>
        <position position="218"/>
    </location>
</feature>
<feature type="mutagenesis site" description="Unable to homooligomerize. Unable to associate with MIEF2 into filaments forming the tubular structures that wrap around the scission site." evidence="45">
    <original>D</original>
    <variation>A</variation>
    <location>
        <position position="221"/>
    </location>
</feature>
<feature type="mutagenesis site" description="Temperature-sensitive. Impairs mitochondrial division." evidence="8">
    <original>G</original>
    <variation>D</variation>
    <location>
        <position position="281"/>
    </location>
</feature>
<feature type="mutagenesis site" description="No effect on S-nitrosylation." evidence="21">
    <original>C</original>
    <variation>A</variation>
    <location>
        <position position="300"/>
    </location>
</feature>
<feature type="mutagenesis site" description="No effect on S-nitrosylation." evidence="21">
    <original>C</original>
    <variation>A</variation>
    <location>
        <position position="345"/>
    </location>
</feature>
<feature type="mutagenesis site" description="No effect on S-nitrosylation." evidence="21">
    <original>C</original>
    <variation>A</variation>
    <location>
        <position position="361"/>
    </location>
</feature>
<feature type="mutagenesis site" description="No effect on S-nitrosylation." evidence="21">
    <original>C</original>
    <variation>A</variation>
    <location>
        <position position="367"/>
    </location>
</feature>
<feature type="mutagenesis site" description="Impairs formation of higher order oligomers, but not homodimerization." evidence="32">
    <original>GPRP</original>
    <variation>AAAA</variation>
    <location>
        <begin position="401"/>
        <end position="404"/>
    </location>
</feature>
<feature type="mutagenesis site" description="No effect on S-nitrosylation." evidence="21">
    <original>C</original>
    <variation>A</variation>
    <location>
        <position position="431"/>
    </location>
</feature>
<feature type="mutagenesis site" description="No effect on S-nitrosylation." evidence="21">
    <original>C</original>
    <variation>A</variation>
    <location>
        <position position="446"/>
    </location>
</feature>
<feature type="mutagenesis site" description="No effect on S-nitrosylation." evidence="21">
    <original>C</original>
    <variation>A</variation>
    <location>
        <position position="470"/>
    </location>
</feature>
<feature type="mutagenesis site" description="Does not impair homodimerization and formation of higher order oligomers." evidence="32">
    <original>E</original>
    <variation>A</variation>
    <location>
        <position position="490"/>
    </location>
</feature>
<feature type="mutagenesis site" description="Impairs homodimerization and formation of higher order oligomers." evidence="32">
    <original>E</original>
    <variation>R</variation>
    <location>
        <position position="490"/>
    </location>
</feature>
<feature type="mutagenesis site" description="No effect on S-nitrosylation." evidence="21">
    <original>C</original>
    <variation>A</variation>
    <location>
        <position position="505"/>
    </location>
</feature>
<feature type="mutagenesis site" description="Some loss of sumoylation in B domain. Complete loss of sumoylation in B domain; when associated with R-535; R-558 and R-568." evidence="24">
    <original>K</original>
    <variation>R</variation>
    <location>
        <position position="532"/>
    </location>
</feature>
<feature type="mutagenesis site" description="Some loss of sumoylation in B domain. Complete loss of sumoylation in B domain; when associated with R-532; R-558 and R-568." evidence="24">
    <original>K</original>
    <variation>R</variation>
    <location>
        <position position="535"/>
    </location>
</feature>
<feature type="mutagenesis site" description="Some loss of sumoylation in B domain. Complete loss of sumoylation in B domain; when associated with R-532; R-535 and R-568." evidence="24">
    <original>K</original>
    <variation>R</variation>
    <location>
        <position position="558"/>
    </location>
</feature>
<feature type="mutagenesis site" description="Some loss of sumoylation in B domain. Complete loss of sumoylation in B domain; when associated with R-532; R-535 and R-558." evidence="24">
    <original>K</original>
    <variation>R</variation>
    <location>
        <position position="568"/>
    </location>
</feature>
<feature type="mutagenesis site" description="Some loss of sumoylation in the GED domain; Complete loss of sumoylation in the GED domain; when associated with R-597; R-606 and R-608." evidence="24">
    <original>K</original>
    <variation>R</variation>
    <location>
        <position position="594"/>
    </location>
</feature>
<feature type="mutagenesis site" description="Some loss of sumoylation in the GED domain; Complete loss of sumoylation in the GED domain; when associated with R-594; R-606 and R-608." evidence="24">
    <original>K</original>
    <variation>R</variation>
    <location>
        <position position="597"/>
    </location>
</feature>
<feature type="mutagenesis site" description="Some loss of sumoylation in the GED domain; Complete loss of sumoylation in the GED domain; when associated with R-594; R-597 and R-608." evidence="24">
    <original>K</original>
    <variation>R</variation>
    <location>
        <position position="606"/>
    </location>
</feature>
<feature type="mutagenesis site" description="Some loss of sumoylation in the GED domain; Complete loss of sumoylation in the GED domain; when associated with R-594; R-597 and R-606." evidence="24">
    <original>K</original>
    <variation>R</variation>
    <location>
        <position position="608"/>
    </location>
</feature>
<feature type="mutagenesis site" description="Loss of activity. Little effect on mitochondrial morphology. Translocated to mitochondria." evidence="20 47">
    <original>S</original>
    <variation>A</variation>
    <location>
        <position position="616"/>
    </location>
</feature>
<feature type="mutagenesis site" description="Abolishes phosphorylation. Reduces interaction with MIEF1 and MIEF2. Promotes mitochondrial fission and cell vulnerability to apoptotic insults. Mostly mitochondrial. Disrupts, in vitro, binding to FIS1." evidence="17 19 20 30">
    <original>S</original>
    <variation>A</variation>
    <location>
        <position position="637"/>
    </location>
</feature>
<feature type="mutagenesis site" description="Impairs intramolecular interactions but not homooligomerization. Does not reduce interaction with MIEF1 and MIEF2. Impairs formation of higher order oligomers but not homodimerization. Unable to associate with MIEF2 into filaments forming the tubular structures that wrap around the scission site. Slight reduction in GTPase activity. Inhibits mitochondrial fission. Retained in the cytoplasm." evidence="17 19 20 30 45 46">
    <original>S</original>
    <variation>D</variation>
    <location>
        <position position="637"/>
    </location>
</feature>
<feature type="mutagenesis site" description="Abolishes S-nitrosylation. Reduced dimerization and no enhancement of GTPase activity." evidence="21">
    <original>C</original>
    <variation>A</variation>
    <location>
        <position position="644"/>
    </location>
</feature>
<feature type="mutagenesis site" description="Abolishes homodimerization and formation of higher order oligomers." evidence="32">
    <original>K</original>
    <variation>E</variation>
    <location>
        <position position="668"/>
    </location>
</feature>
<feature type="mutagenesis site" description="Diminishes intramolecular interaction between GTP-middle domain and GED domain but no effect on homooligomerization. Marked reduction in GTPase activity, in vitro. Decreased mitochondrial division." evidence="11">
    <original>K</original>
    <variation>A</variation>
    <location>
        <position position="679"/>
    </location>
</feature>
<feature type="sequence conflict" description="In Ref. 2; AAC35283 and 4; AAD39541." evidence="60" ref="2 4">
    <original>R</original>
    <variation>C</variation>
    <location>
        <position position="208"/>
    </location>
</feature>
<feature type="helix" evidence="73">
    <location>
        <begin position="5"/>
        <end position="18"/>
    </location>
</feature>
<feature type="turn" evidence="75">
    <location>
        <begin position="21"/>
        <end position="23"/>
    </location>
</feature>
<feature type="strand" evidence="73">
    <location>
        <begin position="27"/>
        <end position="31"/>
    </location>
</feature>
<feature type="helix" evidence="74">
    <location>
        <begin position="34"/>
        <end position="36"/>
    </location>
</feature>
<feature type="helix" evidence="73">
    <location>
        <begin position="38"/>
        <end position="44"/>
    </location>
</feature>
<feature type="strand" evidence="73">
    <location>
        <begin position="55"/>
        <end position="57"/>
    </location>
</feature>
<feature type="strand" evidence="73">
    <location>
        <begin position="63"/>
        <end position="69"/>
    </location>
</feature>
<feature type="strand" evidence="75">
    <location>
        <begin position="86"/>
        <end position="88"/>
    </location>
</feature>
<feature type="strand" evidence="73">
    <location>
        <begin position="90"/>
        <end position="93"/>
    </location>
</feature>
<feature type="helix" evidence="73">
    <location>
        <begin position="94"/>
        <end position="96"/>
    </location>
</feature>
<feature type="helix" evidence="73">
    <location>
        <begin position="104"/>
        <end position="119"/>
    </location>
</feature>
<feature type="strand" evidence="73">
    <location>
        <begin position="121"/>
        <end position="123"/>
    </location>
</feature>
<feature type="strand" evidence="73">
    <location>
        <begin position="130"/>
        <end position="136"/>
    </location>
</feature>
<feature type="strand" evidence="73">
    <location>
        <begin position="141"/>
        <end position="146"/>
    </location>
</feature>
<feature type="helix" evidence="75">
    <location>
        <begin position="155"/>
        <end position="157"/>
    </location>
</feature>
<feature type="helix" evidence="73">
    <location>
        <begin position="162"/>
        <end position="174"/>
    </location>
</feature>
<feature type="strand" evidence="73">
    <location>
        <begin position="179"/>
        <end position="186"/>
    </location>
</feature>
<feature type="helix" evidence="73">
    <location>
        <begin position="191"/>
        <end position="193"/>
    </location>
</feature>
<feature type="helix" evidence="73">
    <location>
        <begin position="195"/>
        <end position="203"/>
    </location>
</feature>
<feature type="strand" evidence="75">
    <location>
        <begin position="205"/>
        <end position="207"/>
    </location>
</feature>
<feature type="strand" evidence="73">
    <location>
        <begin position="210"/>
        <end position="215"/>
    </location>
</feature>
<feature type="helix" evidence="73">
    <location>
        <begin position="217"/>
        <end position="219"/>
    </location>
</feature>
<feature type="strand" evidence="74">
    <location>
        <begin position="222"/>
        <end position="225"/>
    </location>
</feature>
<feature type="helix" evidence="73">
    <location>
        <begin position="227"/>
        <end position="230"/>
    </location>
</feature>
<feature type="strand" evidence="73">
    <location>
        <begin position="233"/>
        <end position="235"/>
    </location>
</feature>
<feature type="strand" evidence="76">
    <location>
        <begin position="237"/>
        <end position="239"/>
    </location>
</feature>
<feature type="strand" evidence="73">
    <location>
        <begin position="241"/>
        <end position="243"/>
    </location>
</feature>
<feature type="helix" evidence="73">
    <location>
        <begin position="249"/>
        <end position="253"/>
    </location>
</feature>
<feature type="helix" evidence="73">
    <location>
        <begin position="258"/>
        <end position="272"/>
    </location>
</feature>
<feature type="turn" evidence="73">
    <location>
        <begin position="274"/>
        <end position="276"/>
    </location>
</feature>
<feature type="helix" evidence="73">
    <location>
        <begin position="277"/>
        <end position="279"/>
    </location>
</feature>
<feature type="helix" evidence="73">
    <location>
        <begin position="282"/>
        <end position="317"/>
    </location>
</feature>
<feature type="helix" evidence="73">
    <location>
        <begin position="338"/>
        <end position="355"/>
    </location>
</feature>
<feature type="helix" evidence="74">
    <location>
        <begin position="363"/>
        <end position="371"/>
    </location>
</feature>
<feature type="helix" evidence="74">
    <location>
        <begin position="373"/>
        <end position="380"/>
    </location>
</feature>
<feature type="helix" evidence="74">
    <location>
        <begin position="389"/>
        <end position="399"/>
    </location>
</feature>
<feature type="helix" evidence="74">
    <location>
        <begin position="409"/>
        <end position="420"/>
    </location>
</feature>
<feature type="helix" evidence="74">
    <location>
        <begin position="421"/>
        <end position="424"/>
    </location>
</feature>
<feature type="helix" evidence="74">
    <location>
        <begin position="425"/>
        <end position="440"/>
    </location>
</feature>
<feature type="turn" evidence="74">
    <location>
        <begin position="441"/>
        <end position="443"/>
    </location>
</feature>
<feature type="helix" evidence="74">
    <location>
        <begin position="444"/>
        <end position="446"/>
    </location>
</feature>
<feature type="helix" evidence="74">
    <location>
        <begin position="458"/>
        <end position="493"/>
    </location>
</feature>
<feature type="helix" evidence="74">
    <location>
        <begin position="501"/>
        <end position="504"/>
    </location>
</feature>
<feature type="helix" evidence="74">
    <location>
        <begin position="643"/>
        <end position="673"/>
    </location>
</feature>
<feature type="helix" evidence="74">
    <location>
        <begin position="675"/>
        <end position="690"/>
    </location>
</feature>
<feature type="helix" evidence="74">
    <location>
        <begin position="693"/>
        <end position="699"/>
    </location>
</feature>
<feature type="helix" evidence="74">
    <location>
        <begin position="704"/>
        <end position="727"/>
    </location>
</feature>
<feature type="helix" evidence="73">
    <location>
        <begin position="728"/>
        <end position="731"/>
    </location>
</feature>
<evidence type="ECO:0000250" key="1"/>
<evidence type="ECO:0000250" key="2">
    <source>
        <dbReference type="UniProtKB" id="O35303"/>
    </source>
</evidence>
<evidence type="ECO:0000250" key="3">
    <source>
        <dbReference type="UniProtKB" id="Q8K1M6"/>
    </source>
</evidence>
<evidence type="ECO:0000255" key="4">
    <source>
        <dbReference type="PROSITE-ProRule" id="PRU00720"/>
    </source>
</evidence>
<evidence type="ECO:0000255" key="5">
    <source>
        <dbReference type="PROSITE-ProRule" id="PRU01055"/>
    </source>
</evidence>
<evidence type="ECO:0000256" key="6">
    <source>
        <dbReference type="SAM" id="MobiDB-lite"/>
    </source>
</evidence>
<evidence type="ECO:0000269" key="7">
    <source>
    </source>
</evidence>
<evidence type="ECO:0000269" key="8">
    <source>
    </source>
</evidence>
<evidence type="ECO:0000269" key="9">
    <source>
    </source>
</evidence>
<evidence type="ECO:0000269" key="10">
    <source>
    </source>
</evidence>
<evidence type="ECO:0000269" key="11">
    <source>
    </source>
</evidence>
<evidence type="ECO:0000269" key="12">
    <source>
    </source>
</evidence>
<evidence type="ECO:0000269" key="13">
    <source>
    </source>
</evidence>
<evidence type="ECO:0000269" key="14">
    <source>
    </source>
</evidence>
<evidence type="ECO:0000269" key="15">
    <source>
    </source>
</evidence>
<evidence type="ECO:0000269" key="16">
    <source>
    </source>
</evidence>
<evidence type="ECO:0000269" key="17">
    <source>
    </source>
</evidence>
<evidence type="ECO:0000269" key="18">
    <source>
    </source>
</evidence>
<evidence type="ECO:0000269" key="19">
    <source>
    </source>
</evidence>
<evidence type="ECO:0000269" key="20">
    <source>
    </source>
</evidence>
<evidence type="ECO:0000269" key="21">
    <source>
    </source>
</evidence>
<evidence type="ECO:0000269" key="22">
    <source>
    </source>
</evidence>
<evidence type="ECO:0000269" key="23">
    <source>
    </source>
</evidence>
<evidence type="ECO:0000269" key="24">
    <source>
    </source>
</evidence>
<evidence type="ECO:0000269" key="25">
    <source>
    </source>
</evidence>
<evidence type="ECO:0000269" key="26">
    <source>
    </source>
</evidence>
<evidence type="ECO:0000269" key="27">
    <source>
    </source>
</evidence>
<evidence type="ECO:0000269" key="28">
    <source>
    </source>
</evidence>
<evidence type="ECO:0000269" key="29">
    <source>
    </source>
</evidence>
<evidence type="ECO:0000269" key="30">
    <source>
    </source>
</evidence>
<evidence type="ECO:0000269" key="31">
    <source>
    </source>
</evidence>
<evidence type="ECO:0000269" key="32">
    <source>
    </source>
</evidence>
<evidence type="ECO:0000269" key="33">
    <source>
    </source>
</evidence>
<evidence type="ECO:0000269" key="34">
    <source>
    </source>
</evidence>
<evidence type="ECO:0000269" key="35">
    <source>
    </source>
</evidence>
<evidence type="ECO:0000269" key="36">
    <source>
    </source>
</evidence>
<evidence type="ECO:0000269" key="37">
    <source>
    </source>
</evidence>
<evidence type="ECO:0000269" key="38">
    <source>
    </source>
</evidence>
<evidence type="ECO:0000269" key="39">
    <source>
    </source>
</evidence>
<evidence type="ECO:0000269" key="40">
    <source>
    </source>
</evidence>
<evidence type="ECO:0000269" key="41">
    <source>
    </source>
</evidence>
<evidence type="ECO:0000269" key="42">
    <source>
    </source>
</evidence>
<evidence type="ECO:0000269" key="43">
    <source>
    </source>
</evidence>
<evidence type="ECO:0000269" key="44">
    <source>
    </source>
</evidence>
<evidence type="ECO:0000269" key="45">
    <source>
    </source>
</evidence>
<evidence type="ECO:0000269" key="46">
    <source>
    </source>
</evidence>
<evidence type="ECO:0000269" key="47">
    <source>
    </source>
</evidence>
<evidence type="ECO:0000269" key="48">
    <source>
    </source>
</evidence>
<evidence type="ECO:0000269" key="49">
    <source>
    </source>
</evidence>
<evidence type="ECO:0000269" key="50">
    <source>
    </source>
</evidence>
<evidence type="ECO:0000269" key="51">
    <source>
    </source>
</evidence>
<evidence type="ECO:0000269" key="52">
    <source>
    </source>
</evidence>
<evidence type="ECO:0000269" key="53">
    <source>
    </source>
</evidence>
<evidence type="ECO:0000269" key="54">
    <source>
    </source>
</evidence>
<evidence type="ECO:0000303" key="55">
    <source>
    </source>
</evidence>
<evidence type="ECO:0000303" key="56">
    <source>
    </source>
</evidence>
<evidence type="ECO:0000303" key="57">
    <source>
    </source>
</evidence>
<evidence type="ECO:0000303" key="58">
    <source>
    </source>
</evidence>
<evidence type="ECO:0000303" key="59">
    <source ref="6"/>
</evidence>
<evidence type="ECO:0000305" key="60"/>
<evidence type="ECO:0000305" key="61">
    <source>
    </source>
</evidence>
<evidence type="ECO:0000312" key="62">
    <source>
        <dbReference type="HGNC" id="HGNC:2973"/>
    </source>
</evidence>
<evidence type="ECO:0007744" key="63">
    <source>
        <dbReference type="PDB" id="5WP9"/>
    </source>
</evidence>
<evidence type="ECO:0007744" key="64">
    <source>
    </source>
</evidence>
<evidence type="ECO:0007744" key="65">
    <source>
    </source>
</evidence>
<evidence type="ECO:0007744" key="66">
    <source>
    </source>
</evidence>
<evidence type="ECO:0007744" key="67">
    <source>
    </source>
</evidence>
<evidence type="ECO:0007744" key="68">
    <source>
    </source>
</evidence>
<evidence type="ECO:0007744" key="69">
    <source>
    </source>
</evidence>
<evidence type="ECO:0007744" key="70">
    <source>
    </source>
</evidence>
<evidence type="ECO:0007744" key="71">
    <source>
    </source>
</evidence>
<evidence type="ECO:0007744" key="72">
    <source>
    </source>
</evidence>
<evidence type="ECO:0007829" key="73">
    <source>
        <dbReference type="PDB" id="3W6P"/>
    </source>
</evidence>
<evidence type="ECO:0007829" key="74">
    <source>
        <dbReference type="PDB" id="4BEJ"/>
    </source>
</evidence>
<evidence type="ECO:0007829" key="75">
    <source>
        <dbReference type="PDB" id="4H1U"/>
    </source>
</evidence>
<evidence type="ECO:0007829" key="76">
    <source>
        <dbReference type="PDB" id="4H1V"/>
    </source>
</evidence>
<reference key="1">
    <citation type="journal article" date="1997" name="J. Biochem.">
        <title>Identification and subcellular localization of a novel mammalian dynamin-related protein homologous to yeast Vps1p and Dnm1p.</title>
        <authorList>
            <person name="Shin H.-W."/>
            <person name="Shinotsuka C."/>
            <person name="Torii S."/>
            <person name="Murakami K."/>
            <person name="Nakayama K."/>
        </authorList>
    </citation>
    <scope>NUCLEOTIDE SEQUENCE [MRNA] (ISOFORM 1)</scope>
    <scope>SUBCELLULAR LOCATION</scope>
    <source>
        <tissue>Hepatoma</tissue>
    </source>
</reference>
<reference key="2">
    <citation type="journal article" date="1998" name="Biochem. Biophys. Res. Commun.">
        <title>Human dynamin-like protein interacts with the glycogen synthase kinase 3beta.</title>
        <authorList>
            <person name="Hong Y.-R."/>
            <person name="Chen C.-H."/>
            <person name="Cheng D.-S."/>
            <person name="Howng S.-L."/>
            <person name="Chow C.-C."/>
        </authorList>
    </citation>
    <scope>NUCLEOTIDE SEQUENCE [MRNA] (ISOFORM 3)</scope>
    <scope>VARIANT THR-71</scope>
    <scope>TISSUE SPECIFICITY</scope>
    <scope>INTERACTION WITH GSK3B</scope>
    <scope>REGION</scope>
    <source>
        <tissue>Liver</tissue>
    </source>
</reference>
<reference key="3">
    <citation type="journal article" date="1998" name="J. Cell Sci.">
        <title>Identification and functional characterization of a novel human protein highly related to the yeast dynamin-like GTPase Vps1p.</title>
        <authorList>
            <person name="Imoto M."/>
            <person name="Tachibana I."/>
            <person name="Urrutia R."/>
        </authorList>
    </citation>
    <scope>NUCLEOTIDE SEQUENCE [MRNA] (ISOFORM 1)</scope>
    <scope>VARIANT THR-71</scope>
    <scope>TISSUE SPECIFICITY</scope>
    <scope>SUBCELLULAR LOCATION</scope>
    <scope>MUTAGENESIS OF LYS-38</scope>
    <scope>FUNCTION</scope>
    <source>
        <tissue>Brain</tissue>
    </source>
</reference>
<reference key="4">
    <citation type="journal article" date="2000" name="DNA Cell Biol.">
        <title>Differential expression of four human dynamin-like protein variants in brain tumors.</title>
        <authorList>
            <person name="Chen C.-H."/>
            <person name="Howng S.-L."/>
            <person name="Hwang S.-L."/>
            <person name="Chou C.-K."/>
            <person name="Liao C.-H."/>
            <person name="Hong Y.-R."/>
        </authorList>
    </citation>
    <scope>NUCLEOTIDE SEQUENCE [MRNA] (ISOFORMS 1; 3; 4 AND 5)</scope>
    <scope>VARIANT THR-71</scope>
    <scope>TISSUE SPECIFICITY</scope>
    <scope>INTERACTION WITH GSK3B</scope>
    <source>
        <tissue>Brain</tissue>
    </source>
</reference>
<reference key="5">
    <citation type="journal article" date="2004" name="Nat. Genet.">
        <title>Complete sequencing and characterization of 21,243 full-length human cDNAs.</title>
        <authorList>
            <person name="Ota T."/>
            <person name="Suzuki Y."/>
            <person name="Nishikawa T."/>
            <person name="Otsuki T."/>
            <person name="Sugiyama T."/>
            <person name="Irie R."/>
            <person name="Wakamatsu A."/>
            <person name="Hayashi K."/>
            <person name="Sato H."/>
            <person name="Nagai K."/>
            <person name="Kimura K."/>
            <person name="Makita H."/>
            <person name="Sekine M."/>
            <person name="Obayashi M."/>
            <person name="Nishi T."/>
            <person name="Shibahara T."/>
            <person name="Tanaka T."/>
            <person name="Ishii S."/>
            <person name="Yamamoto J."/>
            <person name="Saito K."/>
            <person name="Kawai Y."/>
            <person name="Isono Y."/>
            <person name="Nakamura Y."/>
            <person name="Nagahari K."/>
            <person name="Murakami K."/>
            <person name="Yasuda T."/>
            <person name="Iwayanagi T."/>
            <person name="Wagatsuma M."/>
            <person name="Shiratori A."/>
            <person name="Sudo H."/>
            <person name="Hosoiri T."/>
            <person name="Kaku Y."/>
            <person name="Kodaira H."/>
            <person name="Kondo H."/>
            <person name="Sugawara M."/>
            <person name="Takahashi M."/>
            <person name="Kanda K."/>
            <person name="Yokoi T."/>
            <person name="Furuya T."/>
            <person name="Kikkawa E."/>
            <person name="Omura Y."/>
            <person name="Abe K."/>
            <person name="Kamihara K."/>
            <person name="Katsuta N."/>
            <person name="Sato K."/>
            <person name="Tanikawa M."/>
            <person name="Yamazaki M."/>
            <person name="Ninomiya K."/>
            <person name="Ishibashi T."/>
            <person name="Yamashita H."/>
            <person name="Murakawa K."/>
            <person name="Fujimori K."/>
            <person name="Tanai H."/>
            <person name="Kimata M."/>
            <person name="Watanabe M."/>
            <person name="Hiraoka S."/>
            <person name="Chiba Y."/>
            <person name="Ishida S."/>
            <person name="Ono Y."/>
            <person name="Takiguchi S."/>
            <person name="Watanabe S."/>
            <person name="Yosida M."/>
            <person name="Hotuta T."/>
            <person name="Kusano J."/>
            <person name="Kanehori K."/>
            <person name="Takahashi-Fujii A."/>
            <person name="Hara H."/>
            <person name="Tanase T.-O."/>
            <person name="Nomura Y."/>
            <person name="Togiya S."/>
            <person name="Komai F."/>
            <person name="Hara R."/>
            <person name="Takeuchi K."/>
            <person name="Arita M."/>
            <person name="Imose N."/>
            <person name="Musashino K."/>
            <person name="Yuuki H."/>
            <person name="Oshima A."/>
            <person name="Sasaki N."/>
            <person name="Aotsuka S."/>
            <person name="Yoshikawa Y."/>
            <person name="Matsunawa H."/>
            <person name="Ichihara T."/>
            <person name="Shiohata N."/>
            <person name="Sano S."/>
            <person name="Moriya S."/>
            <person name="Momiyama H."/>
            <person name="Satoh N."/>
            <person name="Takami S."/>
            <person name="Terashima Y."/>
            <person name="Suzuki O."/>
            <person name="Nakagawa S."/>
            <person name="Senoh A."/>
            <person name="Mizoguchi H."/>
            <person name="Goto Y."/>
            <person name="Shimizu F."/>
            <person name="Wakebe H."/>
            <person name="Hishigaki H."/>
            <person name="Watanabe T."/>
            <person name="Sugiyama A."/>
            <person name="Takemoto M."/>
            <person name="Kawakami B."/>
            <person name="Yamazaki M."/>
            <person name="Watanabe K."/>
            <person name="Kumagai A."/>
            <person name="Itakura S."/>
            <person name="Fukuzumi Y."/>
            <person name="Fujimori Y."/>
            <person name="Komiyama M."/>
            <person name="Tashiro H."/>
            <person name="Tanigami A."/>
            <person name="Fujiwara T."/>
            <person name="Ono T."/>
            <person name="Yamada K."/>
            <person name="Fujii Y."/>
            <person name="Ozaki K."/>
            <person name="Hirao M."/>
            <person name="Ohmori Y."/>
            <person name="Kawabata A."/>
            <person name="Hikiji T."/>
            <person name="Kobatake N."/>
            <person name="Inagaki H."/>
            <person name="Ikema Y."/>
            <person name="Okamoto S."/>
            <person name="Okitani R."/>
            <person name="Kawakami T."/>
            <person name="Noguchi S."/>
            <person name="Itoh T."/>
            <person name="Shigeta K."/>
            <person name="Senba T."/>
            <person name="Matsumura K."/>
            <person name="Nakajima Y."/>
            <person name="Mizuno T."/>
            <person name="Morinaga M."/>
            <person name="Sasaki M."/>
            <person name="Togashi T."/>
            <person name="Oyama M."/>
            <person name="Hata H."/>
            <person name="Watanabe M."/>
            <person name="Komatsu T."/>
            <person name="Mizushima-Sugano J."/>
            <person name="Satoh T."/>
            <person name="Shirai Y."/>
            <person name="Takahashi Y."/>
            <person name="Nakagawa K."/>
            <person name="Okumura K."/>
            <person name="Nagase T."/>
            <person name="Nomura N."/>
            <person name="Kikuchi H."/>
            <person name="Masuho Y."/>
            <person name="Yamashita R."/>
            <person name="Nakai K."/>
            <person name="Yada T."/>
            <person name="Nakamura Y."/>
            <person name="Ohara O."/>
            <person name="Isogai T."/>
            <person name="Sugano S."/>
        </authorList>
    </citation>
    <scope>NUCLEOTIDE SEQUENCE [LARGE SCALE MRNA] (ISOFORMS 3; 6 AND 7)</scope>
    <source>
        <tissue>Amygdala</tissue>
        <tissue>Brain</tissue>
    </source>
</reference>
<reference key="6">
    <citation type="submission" date="2005-03" db="EMBL/GenBank/DDBJ databases">
        <title>Homo sapiens protein coding cDNA.</title>
        <authorList>
            <person name="Totoki Y."/>
            <person name="Toyoda A."/>
            <person name="Takeda T."/>
            <person name="Sakaki Y."/>
            <person name="Tanaka A."/>
            <person name="Yokoyama S."/>
            <person name="Ohara O."/>
            <person name="Nagase T."/>
            <person name="Kikuno R.F."/>
        </authorList>
    </citation>
    <scope>NUCLEOTIDE SEQUENCE [LARGE SCALE MRNA] (ISOFORM 8)</scope>
    <source>
        <tissue>Brain</tissue>
    </source>
</reference>
<reference key="7">
    <citation type="journal article" date="2006" name="Nature">
        <title>The finished DNA sequence of human chromosome 12.</title>
        <authorList>
            <person name="Scherer S.E."/>
            <person name="Muzny D.M."/>
            <person name="Buhay C.J."/>
            <person name="Chen R."/>
            <person name="Cree A."/>
            <person name="Ding Y."/>
            <person name="Dugan-Rocha S."/>
            <person name="Gill R."/>
            <person name="Gunaratne P."/>
            <person name="Harris R.A."/>
            <person name="Hawes A.C."/>
            <person name="Hernandez J."/>
            <person name="Hodgson A.V."/>
            <person name="Hume J."/>
            <person name="Jackson A."/>
            <person name="Khan Z.M."/>
            <person name="Kovar-Smith C."/>
            <person name="Lewis L.R."/>
            <person name="Lozado R.J."/>
            <person name="Metzker M.L."/>
            <person name="Milosavljevic A."/>
            <person name="Miner G.R."/>
            <person name="Montgomery K.T."/>
            <person name="Morgan M.B."/>
            <person name="Nazareth L.V."/>
            <person name="Scott G."/>
            <person name="Sodergren E."/>
            <person name="Song X.-Z."/>
            <person name="Steffen D."/>
            <person name="Lovering R.C."/>
            <person name="Wheeler D.A."/>
            <person name="Worley K.C."/>
            <person name="Yuan Y."/>
            <person name="Zhang Z."/>
            <person name="Adams C.Q."/>
            <person name="Ansari-Lari M.A."/>
            <person name="Ayele M."/>
            <person name="Brown M.J."/>
            <person name="Chen G."/>
            <person name="Chen Z."/>
            <person name="Clerc-Blankenburg K.P."/>
            <person name="Davis C."/>
            <person name="Delgado O."/>
            <person name="Dinh H.H."/>
            <person name="Draper H."/>
            <person name="Gonzalez-Garay M.L."/>
            <person name="Havlak P."/>
            <person name="Jackson L.R."/>
            <person name="Jacob L.S."/>
            <person name="Kelly S.H."/>
            <person name="Li L."/>
            <person name="Li Z."/>
            <person name="Liu J."/>
            <person name="Liu W."/>
            <person name="Lu J."/>
            <person name="Maheshwari M."/>
            <person name="Nguyen B.-V."/>
            <person name="Okwuonu G.O."/>
            <person name="Pasternak S."/>
            <person name="Perez L.M."/>
            <person name="Plopper F.J.H."/>
            <person name="Santibanez J."/>
            <person name="Shen H."/>
            <person name="Tabor P.E."/>
            <person name="Verduzco D."/>
            <person name="Waldron L."/>
            <person name="Wang Q."/>
            <person name="Williams G.A."/>
            <person name="Zhang J."/>
            <person name="Zhou J."/>
            <person name="Allen C.C."/>
            <person name="Amin A.G."/>
            <person name="Anyalebechi V."/>
            <person name="Bailey M."/>
            <person name="Barbaria J.A."/>
            <person name="Bimage K.E."/>
            <person name="Bryant N.P."/>
            <person name="Burch P.E."/>
            <person name="Burkett C.E."/>
            <person name="Burrell K.L."/>
            <person name="Calderon E."/>
            <person name="Cardenas V."/>
            <person name="Carter K."/>
            <person name="Casias K."/>
            <person name="Cavazos I."/>
            <person name="Cavazos S.R."/>
            <person name="Ceasar H."/>
            <person name="Chacko J."/>
            <person name="Chan S.N."/>
            <person name="Chavez D."/>
            <person name="Christopoulos C."/>
            <person name="Chu J."/>
            <person name="Cockrell R."/>
            <person name="Cox C.D."/>
            <person name="Dang M."/>
            <person name="Dathorne S.R."/>
            <person name="David R."/>
            <person name="Davis C.M."/>
            <person name="Davy-Carroll L."/>
            <person name="Deshazo D.R."/>
            <person name="Donlin J.E."/>
            <person name="D'Souza L."/>
            <person name="Eaves K.A."/>
            <person name="Egan A."/>
            <person name="Emery-Cohen A.J."/>
            <person name="Escotto M."/>
            <person name="Flagg N."/>
            <person name="Forbes L.D."/>
            <person name="Gabisi A.M."/>
            <person name="Garza M."/>
            <person name="Hamilton C."/>
            <person name="Henderson N."/>
            <person name="Hernandez O."/>
            <person name="Hines S."/>
            <person name="Hogues M.E."/>
            <person name="Huang M."/>
            <person name="Idlebird D.G."/>
            <person name="Johnson R."/>
            <person name="Jolivet A."/>
            <person name="Jones S."/>
            <person name="Kagan R."/>
            <person name="King L.M."/>
            <person name="Leal B."/>
            <person name="Lebow H."/>
            <person name="Lee S."/>
            <person name="LeVan J.M."/>
            <person name="Lewis L.C."/>
            <person name="London P."/>
            <person name="Lorensuhewa L.M."/>
            <person name="Loulseged H."/>
            <person name="Lovett D.A."/>
            <person name="Lucier A."/>
            <person name="Lucier R.L."/>
            <person name="Ma J."/>
            <person name="Madu R.C."/>
            <person name="Mapua P."/>
            <person name="Martindale A.D."/>
            <person name="Martinez E."/>
            <person name="Massey E."/>
            <person name="Mawhiney S."/>
            <person name="Meador M.G."/>
            <person name="Mendez S."/>
            <person name="Mercado C."/>
            <person name="Mercado I.C."/>
            <person name="Merritt C.E."/>
            <person name="Miner Z.L."/>
            <person name="Minja E."/>
            <person name="Mitchell T."/>
            <person name="Mohabbat F."/>
            <person name="Mohabbat K."/>
            <person name="Montgomery B."/>
            <person name="Moore N."/>
            <person name="Morris S."/>
            <person name="Munidasa M."/>
            <person name="Ngo R.N."/>
            <person name="Nguyen N.B."/>
            <person name="Nickerson E."/>
            <person name="Nwaokelemeh O.O."/>
            <person name="Nwokenkwo S."/>
            <person name="Obregon M."/>
            <person name="Oguh M."/>
            <person name="Oragunye N."/>
            <person name="Oviedo R.J."/>
            <person name="Parish B.J."/>
            <person name="Parker D.N."/>
            <person name="Parrish J."/>
            <person name="Parks K.L."/>
            <person name="Paul H.A."/>
            <person name="Payton B.A."/>
            <person name="Perez A."/>
            <person name="Perrin W."/>
            <person name="Pickens A."/>
            <person name="Primus E.L."/>
            <person name="Pu L.-L."/>
            <person name="Puazo M."/>
            <person name="Quiles M.M."/>
            <person name="Quiroz J.B."/>
            <person name="Rabata D."/>
            <person name="Reeves K."/>
            <person name="Ruiz S.J."/>
            <person name="Shao H."/>
            <person name="Sisson I."/>
            <person name="Sonaike T."/>
            <person name="Sorelle R.P."/>
            <person name="Sutton A.E."/>
            <person name="Svatek A.F."/>
            <person name="Svetz L.A."/>
            <person name="Tamerisa K.S."/>
            <person name="Taylor T.R."/>
            <person name="Teague B."/>
            <person name="Thomas N."/>
            <person name="Thorn R.D."/>
            <person name="Trejos Z.Y."/>
            <person name="Trevino B.K."/>
            <person name="Ukegbu O.N."/>
            <person name="Urban J.B."/>
            <person name="Vasquez L.I."/>
            <person name="Vera V.A."/>
            <person name="Villasana D.M."/>
            <person name="Wang L."/>
            <person name="Ward-Moore S."/>
            <person name="Warren J.T."/>
            <person name="Wei X."/>
            <person name="White F."/>
            <person name="Williamson A.L."/>
            <person name="Wleczyk R."/>
            <person name="Wooden H.S."/>
            <person name="Wooden S.H."/>
            <person name="Yen J."/>
            <person name="Yoon L."/>
            <person name="Yoon V."/>
            <person name="Zorrilla S.E."/>
            <person name="Nelson D."/>
            <person name="Kucherlapati R."/>
            <person name="Weinstock G."/>
            <person name="Gibbs R.A."/>
        </authorList>
    </citation>
    <scope>NUCLEOTIDE SEQUENCE [LARGE SCALE GENOMIC DNA]</scope>
</reference>
<reference key="8">
    <citation type="journal article" date="2004" name="Genome Res.">
        <title>The status, quality, and expansion of the NIH full-length cDNA project: the Mammalian Gene Collection (MGC).</title>
        <authorList>
            <consortium name="The MGC Project Team"/>
        </authorList>
    </citation>
    <scope>NUCLEOTIDE SEQUENCE [LARGE SCALE MRNA] (ISOFORM 2)</scope>
    <scope>NUCLEOTIDE SEQUENCE [LARGE SCALE MRNA] OF 27-736 (ISOFORM 1)</scope>
    <source>
        <tissue>Lung</tissue>
    </source>
</reference>
<reference key="9">
    <citation type="journal article" date="1998" name="J. Biol. Chem.">
        <title>Dymple, a novel dynamin-like high molecular weight GTPase lacking a proline-rich carboxyl-terminal domain in mammalian cells.</title>
        <authorList>
            <person name="Kamimoto T."/>
            <person name="Nagai Y."/>
            <person name="Onogi H."/>
            <person name="Muro Y."/>
            <person name="Wakabayashi T."/>
            <person name="Hagiwara M."/>
        </authorList>
    </citation>
    <scope>MUTAGENESIS OF SER-39</scope>
    <scope>TISSUE SPECIFICITY</scope>
    <scope>CATALYTIC ACTIVITY</scope>
    <scope>SUBCELLULAR LOCATION</scope>
</reference>
<reference key="10">
    <citation type="journal article" date="1998" name="J. Cell Biol.">
        <title>A novel dynamin-like protein associates with cytoplasmic vesicles and tubules of the endoplasmic reticulum in mammalian cells.</title>
        <authorList>
            <person name="Yoon Y."/>
            <person name="Pitts K.R."/>
            <person name="Dahan S."/>
            <person name="McNiven M.A."/>
        </authorList>
    </citation>
    <scope>SUBCELLULAR LOCATION</scope>
</reference>
<reference key="11">
    <citation type="journal article" date="1998" name="J. Cell Biol.">
        <title>A human dynamin-related protein controls the distribution of mitochondria.</title>
        <authorList>
            <person name="Smirnova E."/>
            <person name="Shurland D.-L."/>
            <person name="Ryazantsev S.N."/>
            <person name="van der Bliek A.M."/>
        </authorList>
    </citation>
    <scope>FUNCTION</scope>
    <scope>TISSUE SPECIFICITY</scope>
    <scope>SUBCELLULAR LOCATION</scope>
</reference>
<reference key="12">
    <citation type="journal article" date="1999" name="J. Biol. Chem.">
        <title>Intermolecular and interdomain interactions of a dynamin-related GTP-binding protein, Dnm1p/Vps1p-like protein.</title>
        <authorList>
            <person name="Shin H.-W."/>
            <person name="Takatsu H."/>
            <person name="Mukai H."/>
            <person name="Munekata E."/>
            <person name="Murakami K."/>
            <person name="Nakayama K."/>
        </authorList>
    </citation>
    <scope>OLIGOMERIZATION</scope>
</reference>
<reference key="13">
    <citation type="journal article" date="2001" name="Mol. Biol. Cell">
        <title>Dynamin-related protein Drp1 is required for mitochondrial division in mammalian cells.</title>
        <authorList>
            <person name="Smirnova E."/>
            <person name="Griparic L."/>
            <person name="Shurland D.-L."/>
            <person name="van der Bliek A.M."/>
        </authorList>
    </citation>
    <scope>FUNCTION</scope>
    <scope>SUBCELLULAR LOCATION</scope>
    <scope>MUTAGENESIS OF LYS-38; VAL-41; THR-59 AND GLY-281</scope>
    <scope>OLIGOMERIZATION</scope>
</reference>
<reference key="14">
    <citation type="journal article" date="2003" name="J. Biol. Chem.">
        <title>Dynamin-like protein 1 is involved in peroxisomal fission.</title>
        <authorList>
            <person name="Koch A."/>
            <person name="Thiemann M."/>
            <person name="Grabenbauer M."/>
            <person name="Yoon Y."/>
            <person name="McNiven M.A."/>
            <person name="Schrader M."/>
        </authorList>
    </citation>
    <scope>FUNCTION</scope>
    <scope>SUBCELLULAR LOCATION</scope>
    <scope>MUTAGENESIS OF LYS-38</scope>
</reference>
<reference key="15">
    <citation type="journal article" date="2003" name="J. Biol. Chem.">
        <title>The dynamin-like GTPase DLP1 is essential for peroxisome division and is recruited to peroxisomes in part by PEX11.</title>
        <authorList>
            <person name="Li X."/>
            <person name="Gould S.J."/>
        </authorList>
    </citation>
    <scope>FUNCTION</scope>
    <scope>SUBCELLULAR LOCATION</scope>
    <scope>MUTAGENESIS OF SER-39 AND THR-59</scope>
</reference>
<reference key="16">
    <citation type="journal article" date="2004" name="J. Biol. Chem.">
        <title>Intra- and intermolecular domain interactions of the C-terminal GTPase effector domain of the multimeric dynamin-like GTPase Drp1.</title>
        <authorList>
            <person name="Zhu P.P."/>
            <person name="Patterson A."/>
            <person name="Stadler J."/>
            <person name="Seeburg D.P."/>
            <person name="Sheng M."/>
            <person name="Blackstone C."/>
        </authorList>
    </citation>
    <scope>OLIGOMERIZATION</scope>
    <scope>SUBCELLULAR LOCATION</scope>
    <scope>DOMAIN</scope>
    <scope>REGION</scope>
    <scope>MUTAGENESIS OF LYS-38 AND LYS-679</scope>
</reference>
<reference key="17">
    <citation type="journal article" date="2006" name="EMBO J.">
        <title>A novel mitochondrial ubiquitin ligase plays a critical role in mitochondrial dynamics.</title>
        <authorList>
            <person name="Yonashiro R."/>
            <person name="Ishido S."/>
            <person name="Kyo S."/>
            <person name="Fukuda T."/>
            <person name="Goto E."/>
            <person name="Matsuki Y."/>
            <person name="Ohmura-Hoshino M."/>
            <person name="Sada K."/>
            <person name="Hotta H."/>
            <person name="Yamamura H."/>
            <person name="Inatome R."/>
            <person name="Yanagi S."/>
        </authorList>
    </citation>
    <scope>UBIQUITINATION BY MARCHF5</scope>
    <scope>INTERACTION WITH MARCHF5</scope>
</reference>
<reference key="18">
    <citation type="journal article" date="2006" name="EMBO Rep.">
        <title>MARCH-V is a novel mitofusin 2- and Drp1-binding protein able to change mitochondrial morphology.</title>
        <authorList>
            <person name="Nakamura N."/>
            <person name="Kimura Y."/>
            <person name="Tokuda M."/>
            <person name="Honda S."/>
            <person name="Hirose S."/>
        </authorList>
    </citation>
    <scope>UBIQUITINATION BY MARCHF5</scope>
    <scope>INTERACTION WITH MARCHF5</scope>
</reference>
<reference key="19">
    <citation type="journal article" date="2006" name="Mol. Cell. Biol.">
        <title>Inhibiting the mitochondrial fission machinery does not prevent Bax/Bak-dependent apoptosis.</title>
        <authorList>
            <person name="Parone P.A."/>
            <person name="James D.I."/>
            <person name="Da Cruz S."/>
            <person name="Mattenberger Y."/>
            <person name="Donze O."/>
            <person name="Barja F."/>
            <person name="Martinou J.C."/>
        </authorList>
    </citation>
    <scope>FUNCTION</scope>
</reference>
<reference key="20">
    <citation type="journal article" date="2007" name="J. Biol. Chem.">
        <title>Mitotic phosphorylation of dynamin-related GTPase Drp1 participates in mitochondrial fission.</title>
        <authorList>
            <person name="Taguchi N."/>
            <person name="Ishihara N."/>
            <person name="Jofuku A."/>
            <person name="Oka T."/>
            <person name="Mihara K."/>
        </authorList>
    </citation>
    <scope>PHOSPHORYLATION</scope>
    <scope>FUNCTION</scope>
</reference>
<reference key="21">
    <citation type="journal article" date="2007" name="J. Biol. Chem.">
        <title>Cyclic AMP-dependent protein kinase phosphorylation of Drp1 regulates its GTPase activity and mitochondrial morphology.</title>
        <authorList>
            <person name="Chang C.R."/>
            <person name="Blackstone C."/>
        </authorList>
    </citation>
    <scope>PHOSPHORYLATION AT SER-637</scope>
    <scope>FUNCTION</scope>
    <scope>SUBUNIT</scope>
    <scope>MUTAGENESIS OF SER-637</scope>
</reference>
<reference key="22">
    <citation type="journal article" date="2007" name="J. Cell Biol.">
        <title>The mitochondrial E3 ubiquitin ligase MARCH5 is required for Drp1 dependent mitochondrial division.</title>
        <authorList>
            <person name="Karbowski M."/>
            <person name="Neutzner A."/>
            <person name="Youle R.J."/>
        </authorList>
    </citation>
    <scope>SUBCELLULAR LOCATION</scope>
</reference>
<reference key="23">
    <citation type="journal article" date="2007" name="N. Engl. J. Med.">
        <title>A lethal defect of mitochondrial and peroxisomal fission.</title>
        <authorList>
            <person name="Waterham H.R."/>
            <person name="Koster J."/>
            <person name="van Roermund C.W."/>
            <person name="Mooyer P.A."/>
            <person name="Wanders R.J."/>
            <person name="Leonard J.V."/>
        </authorList>
    </citation>
    <scope>FUNCTION</scope>
    <scope>VARIANT EMPF1 ASP-395</scope>
    <scope>CHARACTERIZATION OF VARIANT EMPF1 ASP-395</scope>
</reference>
<reference key="24">
    <citation type="journal article" date="2008" name="J. Cell Biol.">
        <title>CaM kinase I alpha-induced phosphorylation of Drp1 regulates mitochondrial morphology.</title>
        <authorList>
            <person name="Han X.J."/>
            <person name="Lu Y.F."/>
            <person name="Li S.A."/>
            <person name="Kaitsuka T."/>
            <person name="Sato Y."/>
            <person name="Tomizawa K."/>
            <person name="Nairn A.C."/>
            <person name="Takei K."/>
            <person name="Matsui H."/>
            <person name="Matsushita M."/>
        </authorList>
    </citation>
    <scope>PHOSPHORYLATION AT SER-637</scope>
    <scope>FUNCTION</scope>
    <scope>INTERACTION WITH FIS1</scope>
    <scope>MUTAGENESIS OF SER-637</scope>
</reference>
<reference key="25">
    <citation type="journal article" date="2008" name="J. Proteome Res.">
        <title>Phosphoproteome of resting human platelets.</title>
        <authorList>
            <person name="Zahedi R.P."/>
            <person name="Lewandrowski U."/>
            <person name="Wiesner J."/>
            <person name="Wortelkamp S."/>
            <person name="Moebius J."/>
            <person name="Schuetz C."/>
            <person name="Walter U."/>
            <person name="Gambaryan S."/>
            <person name="Sickmann A."/>
        </authorList>
    </citation>
    <scope>PHOSPHORYLATION [LARGE SCALE ANALYSIS] AT SER-616</scope>
    <scope>IDENTIFICATION BY MASS SPECTROMETRY [LARGE SCALE ANALYSIS]</scope>
    <source>
        <tissue>Platelet</tissue>
    </source>
</reference>
<reference key="26">
    <citation type="journal article" date="2008" name="Proc. Natl. Acad. Sci. U.S.A.">
        <title>A quantitative atlas of mitotic phosphorylation.</title>
        <authorList>
            <person name="Dephoure N."/>
            <person name="Zhou C."/>
            <person name="Villen J."/>
            <person name="Beausoleil S.A."/>
            <person name="Bakalarski C.E."/>
            <person name="Elledge S.J."/>
            <person name="Gygi S.P."/>
        </authorList>
    </citation>
    <scope>PHOSPHORYLATION [LARGE SCALE ANALYSIS] AT SER-548; SER-607 AND SER-616</scope>
    <scope>IDENTIFICATION BY MASS SPECTROMETRY [LARGE SCALE ANALYSIS]</scope>
    <source>
        <tissue>Cervix carcinoma</tissue>
    </source>
</reference>
<reference key="27">
    <citation type="journal article" date="2008" name="Proc. Natl. Acad. Sci. U.S.A.">
        <title>Dephosphorylation by calcineurin regulates translocation of Drp1 to mitochondria.</title>
        <authorList>
            <person name="Cereghetti G.M."/>
            <person name="Stangherlin A."/>
            <person name="Martins de Brito O."/>
            <person name="Chang C.R."/>
            <person name="Blackstone C."/>
            <person name="Bernardi P."/>
            <person name="Scorrano L."/>
        </authorList>
    </citation>
    <scope>PHOSPHORYLATION AT SER-616 AND SER-637</scope>
    <scope>INTERACTION WITH PPP3CA</scope>
    <scope>DEPHOSPHORYLATION</scope>
    <scope>FUNCTION</scope>
    <scope>SUBCELLULAR LOCATION</scope>
    <scope>MUTAGENESIS OF SER-616 AND SER-637</scope>
</reference>
<reference key="28">
    <citation type="journal article" date="2009" name="Anal. Chem.">
        <title>Lys-N and trypsin cover complementary parts of the phosphoproteome in a refined SCX-based approach.</title>
        <authorList>
            <person name="Gauci S."/>
            <person name="Helbig A.O."/>
            <person name="Slijper M."/>
            <person name="Krijgsveld J."/>
            <person name="Heck A.J."/>
            <person name="Mohammed S."/>
        </authorList>
    </citation>
    <scope>ACETYLATION [LARGE SCALE ANALYSIS] AT MET-1</scope>
    <scope>IDENTIFICATION BY MASS SPECTROMETRY [LARGE SCALE ANALYSIS]</scope>
</reference>
<reference key="29">
    <citation type="journal article" date="2009" name="EMBO Rep.">
        <title>MAPL is a new mitochondrial SUMO E3 ligase that regulates mitochondrial fission.</title>
        <authorList>
            <person name="Braschi E."/>
            <person name="Zunino R."/>
            <person name="McBride H.M."/>
        </authorList>
    </citation>
    <scope>SUMOYLATION BY MUL1</scope>
</reference>
<reference key="30">
    <citation type="journal article" date="2009" name="FASEB J.">
        <title>SUMOylation of the mitochondrial fission protein Drp1 occurs at multiple nonconsensus sites within the B domain and is linked to its activity cycle.</title>
        <authorList>
            <person name="Figueroa-Romero C."/>
            <person name="Iniguez-Lluhi J.A."/>
            <person name="Stadler J."/>
            <person name="Chang C.R."/>
            <person name="Arnoult D."/>
            <person name="Keller P.J."/>
            <person name="Hong Y."/>
            <person name="Blackstone C."/>
            <person name="Feldman E.L."/>
        </authorList>
    </citation>
    <scope>SUMOYLATION AT LYS-532; LYS-535; LYS-558; LYS-568; LYS-594; LYS-597; LYS-606 AND LYS-608</scope>
    <scope>INTERACTION WITH UBE2I</scope>
    <scope>FUNCTION</scope>
    <scope>MUTAGENESIS OF LYS-38; LYS-532; LYS-535; LYS-558; LYS-568; LYS-594; LYS-597; LYS-606 AND LYS-608</scope>
</reference>
<reference key="31">
    <citation type="journal article" date="2009" name="J. Biol. Chem.">
        <title>Translocation of SenP5 from the nucleoli to the mitochondria modulates DRP1-dependent fission during mitosis.</title>
        <authorList>
            <person name="Zunino R."/>
            <person name="Braschi E."/>
            <person name="Xu L."/>
            <person name="McBride H.M."/>
        </authorList>
    </citation>
    <scope>SUMOYLATION</scope>
    <scope>DESUMOYLATION</scope>
    <scope>FUNCTION</scope>
</reference>
<reference key="32">
    <citation type="journal article" date="2009" name="Sci. Signal.">
        <title>Quantitative phosphoproteomic analysis of T cell receptor signaling reveals system-wide modulation of protein-protein interactions.</title>
        <authorList>
            <person name="Mayya V."/>
            <person name="Lundgren D.H."/>
            <person name="Hwang S.-I."/>
            <person name="Rezaul K."/>
            <person name="Wu L."/>
            <person name="Eng J.K."/>
            <person name="Rodionov V."/>
            <person name="Han D.K."/>
        </authorList>
    </citation>
    <scope>PHOSPHORYLATION [LARGE SCALE ANALYSIS] AT SER-616</scope>
    <scope>IDENTIFICATION BY MASS SPECTROMETRY [LARGE SCALE ANALYSIS]</scope>
    <source>
        <tissue>Leukemic T-cell</tissue>
    </source>
</reference>
<reference key="33">
    <citation type="journal article" date="2009" name="Science">
        <title>S-nitrosylation of Drp1 mediates beta-amyloid-related mitochondrial fission and neuronal injury.</title>
        <authorList>
            <person name="Cho D.H."/>
            <person name="Nakamura T."/>
            <person name="Fang J."/>
            <person name="Cieplak P."/>
            <person name="Godzik A."/>
            <person name="Gu Z."/>
            <person name="Lipton S.A."/>
        </authorList>
    </citation>
    <scope>S-NITROSYLATION AT CYS-644</scope>
    <scope>FUNCTION</scope>
    <scope>ASSOCIATION WITH ALZHEIMER DISEASE</scope>
    <scope>MUTAGENESIS OF CYS-300; CYS-345; CYS-361; CYS-367; CYS-431; CYS-446; CYS-470; CYS-505 AND CYS-644</scope>
</reference>
<reference key="34">
    <citation type="journal article" date="2010" name="Exp. Cell Res.">
        <title>Dynamin-like protein 1 at the Golgi complex: A novel component of the sorting/targeting machinery en route to the plasma membrane.</title>
        <authorList>
            <person name="Bonekamp N.A."/>
            <person name="Vormund K."/>
            <person name="Jacob R."/>
            <person name="Schrader M."/>
        </authorList>
    </citation>
    <scope>POSSIBLE FUNCTION</scope>
    <scope>SUBCELLULAR LOCATION</scope>
</reference>
<reference key="35">
    <citation type="journal article" date="2010" name="Sci. Signal.">
        <title>Quantitative phosphoproteomics reveals widespread full phosphorylation site occupancy during mitosis.</title>
        <authorList>
            <person name="Olsen J.V."/>
            <person name="Vermeulen M."/>
            <person name="Santamaria A."/>
            <person name="Kumar C."/>
            <person name="Miller M.L."/>
            <person name="Jensen L.J."/>
            <person name="Gnad F."/>
            <person name="Cox J."/>
            <person name="Jensen T.S."/>
            <person name="Nigg E.A."/>
            <person name="Brunak S."/>
            <person name="Mann M."/>
        </authorList>
    </citation>
    <scope>PHOSPHORYLATION [LARGE SCALE ANALYSIS] AT SER-616</scope>
    <scope>IDENTIFICATION BY MASS SPECTROMETRY [LARGE SCALE ANALYSIS]</scope>
    <source>
        <tissue>Cervix carcinoma</tissue>
    </source>
</reference>
<reference key="36">
    <citation type="journal article" date="2011" name="BMC Syst. Biol.">
        <title>Initial characterization of the human central proteome.</title>
        <authorList>
            <person name="Burkard T.R."/>
            <person name="Planyavsky M."/>
            <person name="Kaupe I."/>
            <person name="Breitwieser F.P."/>
            <person name="Buerckstuemmer T."/>
            <person name="Bennett K.L."/>
            <person name="Superti-Furga G."/>
            <person name="Colinge J."/>
        </authorList>
    </citation>
    <scope>IDENTIFICATION BY MASS SPECTROMETRY [LARGE SCALE ANALYSIS]</scope>
</reference>
<reference key="37">
    <citation type="journal article" date="2011" name="EMBO Rep.">
        <title>MiD49 and MiD51, new components of the mitochondrial fission machinery.</title>
        <authorList>
            <person name="Palmer C.S."/>
            <person name="Osellame L.D."/>
            <person name="Laine D."/>
            <person name="Koutsopoulos O.S."/>
            <person name="Frazier A.E."/>
            <person name="Ryan M.T."/>
        </authorList>
    </citation>
    <scope>INTERACTION WITH MIEF2 AND MIEF1</scope>
</reference>
<reference key="38">
    <citation type="journal article" date="2011" name="EMBO J.">
        <title>Human MIEF1 recruits Drp1 to mitochondrial outer membranes and promotes mitochondrial fusion rather than fission.</title>
        <authorList>
            <person name="Zhao J."/>
            <person name="Liu T."/>
            <person name="Jin S."/>
            <person name="Wang X."/>
            <person name="Qu M."/>
            <person name="Uhlen P."/>
            <person name="Tomilin N."/>
            <person name="Shupliakov O."/>
            <person name="Lendahl U."/>
            <person name="Nister M."/>
        </authorList>
    </citation>
    <scope>INTERACTION WITH MIEF1</scope>
</reference>
<reference key="39">
    <citation type="journal article" date="2011" name="Nat. Cell Biol.">
        <title>RALA and RALBP1 regulate mitochondrial fission at mitosis.</title>
        <authorList>
            <person name="Kashatus D.F."/>
            <person name="Lim K.H."/>
            <person name="Brady D.C."/>
            <person name="Pershing N.L."/>
            <person name="Cox A.D."/>
            <person name="Counter C.M."/>
        </authorList>
    </citation>
    <scope>INTERACTION WITH RALBP1</scope>
    <scope>SUBCELLULAR LOCATION</scope>
    <scope>PHOSPHORYLATION AT SER-616 BY CDK1</scope>
</reference>
<reference key="40">
    <citation type="journal article" date="2011" name="Sci. Signal.">
        <title>System-wide temporal characterization of the proteome and phosphoproteome of human embryonic stem cell differentiation.</title>
        <authorList>
            <person name="Rigbolt K.T."/>
            <person name="Prokhorova T.A."/>
            <person name="Akimov V."/>
            <person name="Henningsen J."/>
            <person name="Johansen P.T."/>
            <person name="Kratchmarova I."/>
            <person name="Kassem M."/>
            <person name="Mann M."/>
            <person name="Olsen J.V."/>
            <person name="Blagoev B."/>
        </authorList>
    </citation>
    <scope>PHOSPHORYLATION [LARGE SCALE ANALYSIS] AT SER-616</scope>
    <scope>IDENTIFICATION BY MASS SPECTROMETRY [LARGE SCALE ANALYSIS]</scope>
</reference>
<reference key="41">
    <citation type="journal article" date="2012" name="Cell">
        <title>The mitochondrial phosphatase PGAM5 functions at the convergence point of multiple necrotic death pathways.</title>
        <authorList>
            <person name="Wang Z."/>
            <person name="Jiang H."/>
            <person name="Chen S."/>
            <person name="Du F."/>
            <person name="Wang X."/>
        </authorList>
    </citation>
    <scope>FUNCTION</scope>
    <scope>INTERACTION WITH PGAM5</scope>
    <scope>SUBCELLULAR LOCATION</scope>
</reference>
<reference key="42">
    <citation type="journal article" date="2012" name="Mol. Cell. Proteomics">
        <title>Comparative large-scale characterisation of plant vs. mammal proteins reveals similar and idiosyncratic N-alpha acetylation features.</title>
        <authorList>
            <person name="Bienvenut W.V."/>
            <person name="Sumpton D."/>
            <person name="Martinez A."/>
            <person name="Lilla S."/>
            <person name="Espagne C."/>
            <person name="Meinnel T."/>
            <person name="Giglione C."/>
        </authorList>
    </citation>
    <scope>ACETYLATION [LARGE SCALE ANALYSIS] AT MET-1</scope>
    <scope>IDENTIFICATION BY MASS SPECTROMETRY [LARGE SCALE ANALYSIS]</scope>
</reference>
<reference key="43">
    <citation type="journal article" date="2013" name="J. Biol. Chem.">
        <title>MiD49 and MiD51 can act independently of Mff and Fis1 in Drp1 recruitment and are specific for mitochondrial fission.</title>
        <authorList>
            <person name="Palmer C.S."/>
            <person name="Elgass K.D."/>
            <person name="Parton R.G."/>
            <person name="Osellame L.D."/>
            <person name="Stojanovski D."/>
            <person name="Ryan M.T."/>
        </authorList>
    </citation>
    <scope>FUNCTION</scope>
    <scope>SUBCELLULAR LOCATION</scope>
</reference>
<reference key="44">
    <citation type="journal article" date="2013" name="J. Proteome Res.">
        <title>Toward a comprehensive characterization of a human cancer cell phosphoproteome.</title>
        <authorList>
            <person name="Zhou H."/>
            <person name="Di Palma S."/>
            <person name="Preisinger C."/>
            <person name="Peng M."/>
            <person name="Polat A.N."/>
            <person name="Heck A.J."/>
            <person name="Mohammed S."/>
        </authorList>
    </citation>
    <scope>PHOSPHORYLATION [LARGE SCALE ANALYSIS] AT SER-529 AND SER-616</scope>
    <scope>IDENTIFICATION BY MASS SPECTROMETRY [LARGE SCALE ANALYSIS]</scope>
    <source>
        <tissue>Cervix carcinoma</tissue>
        <tissue>Erythroleukemia</tissue>
    </source>
</reference>
<reference key="45">
    <citation type="journal article" date="2013" name="Mol. Biol. Cell">
        <title>Fis1, Mff, MiD49, and MiD51 mediate Drp1 recruitment in mitochondrial fission.</title>
        <authorList>
            <person name="Loson O.C."/>
            <person name="Song Z."/>
            <person name="Chen H."/>
            <person name="Chan D.C."/>
        </authorList>
    </citation>
    <scope>FUNCTION</scope>
    <scope>INTERACTION WITH MIEF2 AND MIEF1</scope>
    <scope>PHOSPHORYLATION AT SER-637</scope>
    <scope>MUTAGENESIS OF SER-637</scope>
</reference>
<reference key="46">
    <citation type="journal article" date="2013" name="Nat. Cell Biol.">
        <title>A Bcl-xL-Drp1 complex regulates synaptic vesicle membrane dynamics during endocytosis.</title>
        <authorList>
            <person name="Li H."/>
            <person name="Alavian K.N."/>
            <person name="Lazrove E."/>
            <person name="Mehta N."/>
            <person name="Jones A."/>
            <person name="Zhang P."/>
            <person name="Licznerski P."/>
            <person name="Graham M."/>
            <person name="Uo T."/>
            <person name="Guo J."/>
            <person name="Rahner C."/>
            <person name="Duman R.S."/>
            <person name="Morrison R.S."/>
            <person name="Jonas E.A."/>
        </authorList>
    </citation>
    <scope>INTERACTION WITH BCL2L1</scope>
    <scope>FUNCTION</scope>
</reference>
<reference key="47">
    <citation type="journal article" date="2014" name="J. Proteomics">
        <title>An enzyme assisted RP-RPLC approach for in-depth analysis of human liver phosphoproteome.</title>
        <authorList>
            <person name="Bian Y."/>
            <person name="Song C."/>
            <person name="Cheng K."/>
            <person name="Dong M."/>
            <person name="Wang F."/>
            <person name="Huang J."/>
            <person name="Sun D."/>
            <person name="Wang L."/>
            <person name="Ye M."/>
            <person name="Zou H."/>
        </authorList>
    </citation>
    <scope>PHOSPHORYLATION [LARGE SCALE ANALYSIS] AT SER-616</scope>
    <scope>IDENTIFICATION BY MASS SPECTROMETRY [LARGE SCALE ANALYSIS]</scope>
    <source>
        <tissue>Liver</tissue>
    </source>
</reference>
<reference key="48">
    <citation type="journal article" date="2014" name="Mol. Biol. Cell">
        <title>Mutations in Fis1 disrupt orderly disposal of defective mitochondria.</title>
        <authorList>
            <person name="Shen Q."/>
            <person name="Yamano K."/>
            <person name="Head B.P."/>
            <person name="Kawajiri S."/>
            <person name="Cheung J.T."/>
            <person name="Wang C."/>
            <person name="Cho J.H."/>
            <person name="Hattori N."/>
            <person name="Youle R.J."/>
            <person name="van der Bliek A.M."/>
        </authorList>
    </citation>
    <scope>INTERACTION WITH FIS1; CANX; BCAP31</scope>
</reference>
<reference key="49">
    <citation type="journal article" date="2015" name="Brain">
        <title>Signal transducer and activator of transcription 2 deficiency is a novel disorder of mitochondrial fission.</title>
        <authorList>
            <person name="Shahni R."/>
            <person name="Cale C.M."/>
            <person name="Anderson G."/>
            <person name="Osellame L.D."/>
            <person name="Hambleton S."/>
            <person name="Jacques T.S."/>
            <person name="Wedatilake Y."/>
            <person name="Taanman J.W."/>
            <person name="Chan E."/>
            <person name="Qasim W."/>
            <person name="Plagnol V."/>
            <person name="Chalasani A."/>
            <person name="Duchen M.R."/>
            <person name="Gilmour K.C."/>
            <person name="Rahman S."/>
        </authorList>
    </citation>
    <scope>SUBCELLULAR LOCATION</scope>
    <scope>PHOSPHORYLATION AT SER-616 AND SER-637</scope>
</reference>
<reference key="50">
    <citation type="journal article" date="2013" name="Proc. Natl. Acad. Sci. U.S.A.">
        <title>Interchangeable adaptors regulate mitochondrial dynamin assembly for membrane scission.</title>
        <authorList>
            <person name="Koirala S."/>
            <person name="Guo Q."/>
            <person name="Kalia R."/>
            <person name="Bui H.T."/>
            <person name="Eckert D.M."/>
            <person name="Frost A."/>
            <person name="Shaw J.M."/>
        </authorList>
    </citation>
    <scope>FUNCTION</scope>
    <scope>INTERACTION WITH MIEF2</scope>
    <scope>SUBUNIT</scope>
</reference>
<reference key="51">
    <citation type="journal article" date="2016" name="EMBO J.">
        <title>FUNDC1 regulates mitochondrial dynamics at the ER-mitochondrial contact site under hypoxic conditions.</title>
        <authorList>
            <person name="Wu W."/>
            <person name="Lin C."/>
            <person name="Wu K."/>
            <person name="Jiang L."/>
            <person name="Wang X."/>
            <person name="Li W."/>
            <person name="Zhuang H."/>
            <person name="Zhang X."/>
            <person name="Chen H."/>
            <person name="Li S."/>
            <person name="Yang Y."/>
            <person name="Lu Y."/>
            <person name="Wang J."/>
            <person name="Zhu R."/>
            <person name="Zhang L."/>
            <person name="Sui S."/>
            <person name="Tan N."/>
            <person name="Zhao B."/>
            <person name="Zhang J."/>
            <person name="Li L."/>
            <person name="Feng D."/>
        </authorList>
    </citation>
    <scope>FUNCTION</scope>
    <scope>SUBCELLULAR LOCATION</scope>
    <scope>INTERACTION WITH FUNDC1</scope>
</reference>
<reference key="52">
    <citation type="journal article" date="2018" name="Cell Metab.">
        <title>Circadian control of DRP1 activity regulates mitochondrial dynamics and bioenergetics.</title>
        <authorList>
            <person name="Schmitt K."/>
            <person name="Grimm A."/>
            <person name="Dallmann R."/>
            <person name="Oettinghaus B."/>
            <person name="Restelli L.M."/>
            <person name="Witzig M."/>
            <person name="Ishihara N."/>
            <person name="Mihara K."/>
            <person name="Ripperger J.A."/>
            <person name="Albrecht U."/>
            <person name="Frank S."/>
            <person name="Brown S.A."/>
            <person name="Eckert A."/>
        </authorList>
    </citation>
    <scope>FUNCTION</scope>
    <scope>PHOSPHORYLATION AT SER-637</scope>
</reference>
<reference key="53">
    <citation type="journal article" date="2020" name="EMBO Rep.">
        <title>PINK1 phosphorylates Drp1S616 to regulate mitophagy-independent mitochondrial dynamics.</title>
        <authorList>
            <person name="Han H."/>
            <person name="Tan J."/>
            <person name="Wang R."/>
            <person name="Wan H."/>
            <person name="He Y."/>
            <person name="Yan X."/>
            <person name="Guo J."/>
            <person name="Gao Q."/>
            <person name="Li J."/>
            <person name="Shang S."/>
            <person name="Chen F."/>
            <person name="Tian R."/>
            <person name="Liu W."/>
            <person name="Liao L."/>
            <person name="Tang B."/>
            <person name="Zhang Z."/>
        </authorList>
    </citation>
    <scope>FUNCTION</scope>
    <scope>PHOSPHORYLATION AT SER-616</scope>
    <scope>MUTAGENESIS OF SER-616</scope>
</reference>
<reference key="54">
    <citation type="journal article" date="2020" name="Nat. Commun.">
        <title>Mitochondrial phosphatase PGAM5 modulates cellular senescence by regulating mitochondrial dynamics.</title>
        <authorList>
            <person name="Yu B."/>
            <person name="Ma J."/>
            <person name="Li J."/>
            <person name="Wang D."/>
            <person name="Wang Z."/>
            <person name="Wang S."/>
        </authorList>
    </citation>
    <scope>FUNCTION</scope>
    <scope>DEPHOSPHORYLATION BY PGAM5</scope>
    <scope>MUTAGENESIS OF LYS-38 AND SER-637</scope>
    <scope>PHOSPHORYLATION AT SER-637</scope>
</reference>
<reference key="55">
    <citation type="journal article" date="2021" name="Sci. Signal.">
        <title>DDAH2 suppresses RLR-MAVS-mediated innate antiviral immunity by stimulating nitric oxide-activated, Drp1-induced mitochondrial fission.</title>
        <authorList>
            <person name="Huang S."/>
            <person name="Li Z."/>
            <person name="Wu Z."/>
            <person name="Liu C."/>
            <person name="Yu M."/>
            <person name="Wen M."/>
            <person name="Zhang L."/>
            <person name="Wang X."/>
        </authorList>
    </citation>
    <scope>FUNCTION</scope>
    <scope>PHOSPHORYLATION</scope>
</reference>
<reference key="56">
    <citation type="journal article" date="2013" name="EMBO J.">
        <title>Structural insights into oligomerization and mitochondrial remodelling of dynamin 1-like protein.</title>
        <authorList>
            <person name="Frohlich C."/>
            <person name="Grabiger S."/>
            <person name="Schwefel D."/>
            <person name="Faelber K."/>
            <person name="Rosenbaum E."/>
            <person name="Mears J."/>
            <person name="Rocks O."/>
            <person name="Daumke O."/>
        </authorList>
    </citation>
    <scope>X-RAY CRYSTALLOGRAPHY (3.48 ANGSTROMS)</scope>
    <scope>FUNCTION</scope>
    <scope>SUBUNIT</scope>
    <scope>SUBCELLULAR LOCATION</scope>
    <scope>MUTAGENESIS OF 401-GLY--PRO-404; GLU-490 AND LYS-668</scope>
    <scope>LIPID-BINDING</scope>
    <scope>REGION</scope>
</reference>
<reference key="57">
    <citation type="journal article" date="2013" name="PLoS ONE">
        <title>Functional mapping of human dynamin-1-like GTPase domain based on x-ray structure analyses.</title>
        <authorList>
            <person name="Wenger J."/>
            <person name="Klinglmayr E."/>
            <person name="Frohlich C."/>
            <person name="Eibl C."/>
            <person name="Gimeno A."/>
            <person name="Hessenberger M."/>
            <person name="Puehringer S."/>
            <person name="Daumke O."/>
            <person name="Goettig P."/>
        </authorList>
    </citation>
    <scope>X-RAY CRYSTALLOGRAPHY (2.30 ANGSTROMS) OF 1-327 AND 711-736 IN COMPLEX WITH GTP ANALOGS</scope>
    <scope>CATALYTIC ACTIVITY</scope>
    <scope>MUTAGENESIS OF GLN-34; LYS-38; SER-39; THR-59; ASP-146; GLY-149; LYS-216 AND ASP-218</scope>
    <scope>ACTIVITY REGULATION</scope>
    <scope>SUBUNIT</scope>
</reference>
<reference evidence="63" key="58">
    <citation type="journal article" date="2018" name="Nature">
        <title>Structural basis of mitochondrial receptor binding and constriction by DRP1.</title>
        <authorList>
            <person name="Kalia R."/>
            <person name="Wang R.Y."/>
            <person name="Yusuf A."/>
            <person name="Thomas P.V."/>
            <person name="Agard D.A."/>
            <person name="Shaw J.M."/>
            <person name="Frost A."/>
        </authorList>
    </citation>
    <scope>STRUCTURE BY ELECTRON MICROSCOPY (4.22 ANGSTROMS) (ISOFORM 2) IN COMPLEX WITH MIEF2</scope>
    <scope>MUTAGENESIS OF ASP-190; ASP-221 AND SER-637</scope>
    <scope>CHARACTERIZATION OF VARIANT EMPF1 ASP-362</scope>
</reference>
<reference key="59">
    <citation type="journal article" date="2016" name="Eur. J. Hum. Genet.">
        <title>DNM1L-related mitochondrial fission defect presenting as refractory epilepsy.</title>
        <authorList>
            <consortium name="Care4Rare Consortium"/>
            <person name="Vanstone J.R."/>
            <person name="Smith A.M."/>
            <person name="McBride S."/>
            <person name="Naas T."/>
            <person name="Holcik M."/>
            <person name="Antoun G."/>
            <person name="Harper M.E."/>
            <person name="Michaud J."/>
            <person name="Sell E."/>
            <person name="Chakraborty P."/>
            <person name="Tetreault M."/>
            <person name="Majewski J."/>
            <person name="Baird S."/>
            <person name="Boycott K.M."/>
            <person name="Dyment D.A."/>
            <person name="MacKenzie A."/>
            <person name="Lines M.A."/>
        </authorList>
    </citation>
    <scope>VARIANT EMPF1 ASP-362</scope>
    <scope>CHARACTERIZATION OF VARIANT EMPF1 ASP-362</scope>
</reference>
<reference key="60">
    <citation type="journal article" date="2016" name="Am. J. Med. Genet. A">
        <title>A novel de novo dominant negative mutation in DNM1L impairs mitochondrial fission and presents as childhood epileptic encephalopathy.</title>
        <authorList>
            <person name="Fahrner J.A."/>
            <person name="Liu R."/>
            <person name="Perry M.S."/>
            <person name="Klein J."/>
            <person name="Chan D.C."/>
        </authorList>
    </citation>
    <scope>VARIANT EMPF1 CYS-403</scope>
    <scope>CHARACTERIZATION OF VARIANTS EMPF1 ASP-395 AND CYS-403</scope>
    <scope>FUNCTION</scope>
    <scope>SUBUNIT</scope>
    <scope>SUBCELLULAR LOCATION</scope>
</reference>
<reference key="61">
    <citation type="journal article" date="2016" name="Am. J. Med. Genet. A">
        <title>Postnatal microcephaly and pain insensitivity due to a de novo heterozygous DNM1L mutation causing impaired mitochondrial fission and function.</title>
        <authorList>
            <person name="Sheffer R."/>
            <person name="Douiev L."/>
            <person name="Edvardson S."/>
            <person name="Shaag A."/>
            <person name="Tamimi K."/>
            <person name="Soiferman D."/>
            <person name="Meiner V."/>
            <person name="Saada A."/>
        </authorList>
    </citation>
    <scope>VARIANT EMPF1 SER-362</scope>
    <scope>CHARACTERIZATION OF VARIANT EMPF1 SER-362</scope>
    <scope>FUNCTION</scope>
</reference>
<reference key="62">
    <citation type="journal article" date="2016" name="Clin. Genet.">
        <title>DNM1L-related encephalopathy in infancy with Leigh syndrome-like phenotype and suppression-burst.</title>
        <authorList>
            <person name="Zaha K."/>
            <person name="Matsumoto H."/>
            <person name="Itoh M."/>
            <person name="Saitsu H."/>
            <person name="Kato K."/>
            <person name="Kato M."/>
            <person name="Ogata S."/>
            <person name="Murayama K."/>
            <person name="Kishita Y."/>
            <person name="Mizuno Y."/>
            <person name="Kohda M."/>
            <person name="Nishino I."/>
            <person name="Ohtake A."/>
            <person name="Okazaki Y."/>
            <person name="Matsumoto N."/>
            <person name="Nonoyama S."/>
        </authorList>
    </citation>
    <scope>VARIANT EMPF1 SER-406</scope>
    <scope>CHARACTERIZATION OF VARIANT EMPF1 SER-406</scope>
    <scope>FUNCTION</scope>
</reference>
<reference key="63">
    <citation type="journal article" date="2016" name="Hum. Mutat.">
        <title>Biallelic Mutations in DNM1L are Associated with a Slowly Progressive Infantile Encephalopathy.</title>
        <authorList>
            <person name="Nasca A."/>
            <person name="Legati A."/>
            <person name="Baruffini E."/>
            <person name="Nolli C."/>
            <person name="Moroni I."/>
            <person name="Ardissone A."/>
            <person name="Goffrini P."/>
            <person name="Ghezzi D."/>
        </authorList>
    </citation>
    <scope>VARIANT EMPF1 GLY-36</scope>
    <scope>CHARACTERIZATION OF VARIANT EMPF1 GLY-36</scope>
    <scope>FUNCTION</scope>
</reference>
<reference key="64">
    <citation type="journal article" date="2017" name="Brain">
        <title>Mutations in DNM1L, as in OPA1, result indominant optic atrophy despite opposite effectson mitochondrial fusion and fission.</title>
        <authorList>
            <person name="Gerber S."/>
            <person name="Charif M."/>
            <person name="Chevrollier A."/>
            <person name="Chaumette T."/>
            <person name="Angebault C."/>
            <person name="Kane M.S."/>
            <person name="Paris A."/>
            <person name="Alban J."/>
            <person name="Quiles M."/>
            <person name="Delettre C."/>
            <person name="Bonneau D."/>
            <person name="Procaccio V."/>
            <person name="Amati-Bonneau P."/>
            <person name="Reynier P."/>
            <person name="Leruez S."/>
            <person name="Calmon R."/>
            <person name="Boddaert N."/>
            <person name="Funalot B."/>
            <person name="Rio M."/>
            <person name="Bouccara D."/>
            <person name="Meunier I."/>
            <person name="Sesaki H."/>
            <person name="Kaplan J."/>
            <person name="Hamel C.P."/>
            <person name="Rozet J.M."/>
            <person name="Lenaers G."/>
        </authorList>
    </citation>
    <scope>INVOLVEMENT IN OPA5</scope>
    <scope>VARIANTS OPA5 ALA-2 AND GLU-192</scope>
    <scope>CHARACTERIZATION OF VARIANTS OPA5 ALA-2 AND GLU-192</scope>
    <scope>SUBCELLULAR LOCATION</scope>
</reference>
<protein>
    <recommendedName>
        <fullName>Dynamin-1-like protein</fullName>
        <ecNumber evidence="35 50">3.6.5.5</ecNumber>
    </recommendedName>
    <alternativeName>
        <fullName>Dnm1p/Vps1p-like protein</fullName>
        <shortName>DVLP</shortName>
    </alternativeName>
    <alternativeName>
        <fullName>Dynamin family member proline-rich carboxyl-terminal domain less</fullName>
        <shortName>Dymple</shortName>
    </alternativeName>
    <alternativeName>
        <fullName>Dynamin-like protein</fullName>
    </alternativeName>
    <alternativeName>
        <fullName>Dynamin-like protein 4</fullName>
    </alternativeName>
    <alternativeName>
        <fullName>Dynamin-like protein IV</fullName>
        <shortName>HdynIV</shortName>
    </alternativeName>
    <alternativeName>
        <fullName>Dynamin-related protein 1</fullName>
    </alternativeName>
</protein>
<organism>
    <name type="scientific">Homo sapiens</name>
    <name type="common">Human</name>
    <dbReference type="NCBI Taxonomy" id="9606"/>
    <lineage>
        <taxon>Eukaryota</taxon>
        <taxon>Metazoa</taxon>
        <taxon>Chordata</taxon>
        <taxon>Craniata</taxon>
        <taxon>Vertebrata</taxon>
        <taxon>Euteleostomi</taxon>
        <taxon>Mammalia</taxon>
        <taxon>Eutheria</taxon>
        <taxon>Euarchontoglires</taxon>
        <taxon>Primates</taxon>
        <taxon>Haplorrhini</taxon>
        <taxon>Catarrhini</taxon>
        <taxon>Hominidae</taxon>
        <taxon>Homo</taxon>
    </lineage>
</organism>
<gene>
    <name evidence="62" type="primary">DNM1L</name>
    <name type="synonym">DLP1</name>
    <name type="synonym">DRP1</name>
</gene>
<comment type="function">
    <text evidence="3 8 9 14 15 16 17 19 20 21 23 24 25 29 30 31 32 33 34 38 39 40 41 42 44 45 46 47 48 52 54">Functions in mitochondrial and peroxisomal division (PubMed:11514614, PubMed:12499366, PubMed:17301055, PubMed:17460227, PubMed:17553808, PubMed:18695047, PubMed:18838687, PubMed:19342591, PubMed:19411255, PubMed:19638400, PubMed:23283981, PubMed:23530241, PubMed:23921378, PubMed:26992161, PubMed:27145208, PubMed:27145933, PubMed:27301544, PubMed:27328748, PubMed:29478834, PubMed:32439975, PubMed:32484300, PubMed:9570752, PubMed:9786947). Mediates membrane fission through oligomerization into membrane-associated tubular structures that wrap around the scission site to constrict and sever the mitochondrial membrane through a GTP hydrolysis-dependent mechanism (PubMed:23530241, PubMed:23584531, PubMed:33850055). The specific recruitment at scission sites is mediated by membrane receptors like MFF, MIEF1 and MIEF2 for mitochondrial membranes (PubMed:23283981, PubMed:23921378, PubMed:29899447). While the recruitment by the membrane receptors is GTP-dependent, the following hydrolysis of GTP induces the dissociation from the receptors and allows DNM1L filaments to curl into closed rings that are probably sufficient to sever a double membrane (PubMed:29899447). Acts downstream of PINK1 to promote mitochondrial fission in a PRKN-dependent manner (PubMed:32484300). Plays an important role in mitochondrial fission during mitosis (PubMed:19411255, PubMed:26992161, PubMed:27301544, PubMed:27328748). Through its function in mitochondrial division, ensures the survival of at least some types of postmitotic neurons, including Purkinje cells, by suppressing oxidative damage (By similarity). Required for normal brain development, including that of cerebellum (PubMed:17460227, PubMed:26992161, PubMed:27145208, PubMed:27301544, PubMed:27328748). Facilitates developmentally regulated apoptosis during neural tube formation (By similarity). Required for a normal rate of cytochrome c release and caspase activation during apoptosis; this requirement may depend upon the cell type and the physiological apoptotic cues (By similarity). Required for formation of endocytic vesicles (PubMed:20688057, PubMed:23792689, PubMed:9570752). Proposed to regulate synaptic vesicle membrane dynamics through association with BCL2L1 isoform Bcl-X(L) which stimulates its GTPase activity in synaptic vesicles; the function may require its recruitment by MFF to clathrin-containing vesicles (PubMed:17015472, PubMed:23792689). Required for programmed necrosis execution (PubMed:22265414). Rhythmic control of its activity following phosphorylation at Ser-637 is essential for the circadian control of mitochondrial ATP production (PubMed:29478834).</text>
</comment>
<comment type="function">
    <molecule>Isoform 1</molecule>
    <text evidence="10">Inhibits peroxisomal division when overexpressed.</text>
</comment>
<comment type="function">
    <molecule>Isoform 4</molecule>
    <text evidence="10">Inhibits peroxisomal division when overexpressed.</text>
</comment>
<comment type="catalytic activity">
    <reaction evidence="35 50">
        <text>GTP + H2O = GDP + phosphate + H(+)</text>
        <dbReference type="Rhea" id="RHEA:19669"/>
        <dbReference type="ChEBI" id="CHEBI:15377"/>
        <dbReference type="ChEBI" id="CHEBI:15378"/>
        <dbReference type="ChEBI" id="CHEBI:37565"/>
        <dbReference type="ChEBI" id="CHEBI:43474"/>
        <dbReference type="ChEBI" id="CHEBI:58189"/>
        <dbReference type="EC" id="3.6.5.5"/>
    </reaction>
</comment>
<comment type="activity regulation">
    <text evidence="35">GTPase activity is increased by binding to phospholipid membranes.</text>
</comment>
<comment type="subunit">
    <text evidence="3 7 12 13 17 19 20 24 26 27 28 29 30 31 32 33 35 39 40 53">Homotetramer; dimerizes through the N-terminal GTP-middle region of one molecule binding to the GED domain of another DNM1L molecule (PubMed:17553808, PubMed:23530241, PubMed:23584531, PubMed:23977156). Oligomerizes in a GTP-dependent manner to form membrane-associated tubules with a spiral pattern (PubMed:23584531). Interacts with GSK3B and MARCHF5 (PubMed:10749171, PubMed:16874301, PubMed:16936636, PubMed:9731200). Interacts (via the GTPase and B domains) with UBE2I; the interaction promotes sumoylation of DNM1L, mainly in its B domain (PubMed:19638400). Interacts with PPP3CA; the interaction dephosphorylates DNM1L and regulates its transition to mitochondria (PubMed:18838687). Interacts with BCL2L1 isoform BCL-X(L) and CLTA; DNM1L and BCL2L1 isoform BCL-X(L) may form a complex in synaptic vesicles that also contains clathrin and MFF (PubMed:23792689). Interacts with MFF; the interaction is inhibited by C11orf65/MFI (By similarity). Interacts with FIS1; may form part of a larger protein complex at the endoplasmic reticulum-mitochondrial interface during mitochondrial fission (PubMed:18695047, PubMed:24196833). Interacts with CANX (PubMed:24196833). Interacts with BCAP31 (PubMed:24196833). Interacts with MIEF2 and MIEF1; GTP-dependent, regulates GTP hydrolysis and DNM1L oligomerization (PubMed:21508961). Interacts with PGAM5; this interaction leads to dephosphorylation at Ser-656 and activation of GTPase activity and eventually to mitochondria fragmentation (PubMed:22265414). Interacts with RALBP1; during mitosis, recruits DNM1L to the mitochondrion and mediates its activation by the mitotic kinase cyclin B-CDK1 (PubMed:21822277). Interacts with FUNDC1; this interaction recruits DNM1L/DRP1 at ER-mitochondria contact sites (PubMed:27145933).</text>
</comment>
<comment type="interaction">
    <interactant intactId="EBI-724571">
        <id>O00429</id>
    </interactant>
    <interactant intactId="EBI-352007">
        <id>Q9NVI7</id>
        <label>ATAD3A</label>
    </interactant>
    <organismsDiffer>false</organismsDiffer>
    <experiments>4</experiments>
</comment>
<comment type="interaction">
    <interactant intactId="EBI-724571">
        <id>O00429</id>
    </interactant>
    <interactant intactId="EBI-5456381">
        <id>Q9NVI7-2</id>
        <label>ATAD3A</label>
    </interactant>
    <organismsDiffer>false</organismsDiffer>
    <experiments>5</experiments>
</comment>
<comment type="interaction">
    <interactant intactId="EBI-724571">
        <id>O00429</id>
    </interactant>
    <interactant intactId="EBI-724571">
        <id>O00429</id>
        <label>DNM1L</label>
    </interactant>
    <organismsDiffer>false</organismsDiffer>
    <experiments>2</experiments>
</comment>
<comment type="interaction">
    <interactant intactId="EBI-724571">
        <id>O00429</id>
    </interactant>
    <interactant intactId="EBI-78473">
        <id>P03372</id>
        <label>ESR1</label>
    </interactant>
    <organismsDiffer>false</organismsDiffer>
    <experiments>2</experiments>
</comment>
<comment type="interaction">
    <interactant intactId="EBI-724571">
        <id>O00429</id>
    </interactant>
    <interactant intactId="EBI-3385283">
        <id>Q9Y3D6</id>
        <label>FIS1</label>
    </interactant>
    <organismsDiffer>false</organismsDiffer>
    <experiments>2</experiments>
</comment>
<comment type="interaction">
    <interactant intactId="EBI-724571">
        <id>O00429</id>
    </interactant>
    <interactant intactId="EBI-5323863">
        <id>Q5S007</id>
        <label>LRRK2</label>
    </interactant>
    <organismsDiffer>false</organismsDiffer>
    <experiments>16</experiments>
</comment>
<comment type="interaction">
    <interactant intactId="EBI-724571">
        <id>O00429</id>
    </interactant>
    <interactant intactId="EBI-11420856">
        <id>Q9GZY8</id>
        <label>MFF</label>
    </interactant>
    <organismsDiffer>false</organismsDiffer>
    <experiments>3</experiments>
</comment>
<comment type="interaction">
    <interactant intactId="EBI-724571">
        <id>O00429</id>
    </interactant>
    <interactant intactId="EBI-740987">
        <id>Q9NQG6</id>
        <label>MIEF1</label>
    </interactant>
    <organismsDiffer>false</organismsDiffer>
    <experiments>11</experiments>
</comment>
<comment type="interaction">
    <interactant intactId="EBI-724571">
        <id>O00429</id>
    </interactant>
    <interactant intactId="EBI-750153">
        <id>Q96C03</id>
        <label>MIEF2</label>
    </interactant>
    <organismsDiffer>false</organismsDiffer>
    <experiments>5</experiments>
</comment>
<comment type="interaction">
    <interactant intactId="EBI-724571">
        <id>O00429</id>
    </interactant>
    <interactant intactId="EBI-748409">
        <id>Q9Y512</id>
        <label>SAMM50</label>
    </interactant>
    <organismsDiffer>false</organismsDiffer>
    <experiments>3</experiments>
</comment>
<comment type="interaction">
    <interactant intactId="EBI-724571">
        <id>O00429</id>
    </interactant>
    <interactant intactId="EBI-357345">
        <id>Q14160</id>
        <label>SCRIB</label>
    </interactant>
    <organismsDiffer>false</organismsDiffer>
    <experiments>2</experiments>
</comment>
<comment type="interaction">
    <interactant intactId="EBI-6896746">
        <id>O00429-3</id>
    </interactant>
    <interactant intactId="EBI-6896746">
        <id>O00429-3</id>
        <label>DNM1L</label>
    </interactant>
    <organismsDiffer>false</organismsDiffer>
    <experiments>8</experiments>
</comment>
<comment type="interaction">
    <interactant intactId="EBI-6896746">
        <id>O00429-3</id>
    </interactant>
    <interactant intactId="EBI-5323863">
        <id>Q5S007</id>
        <label>LRRK2</label>
    </interactant>
    <organismsDiffer>false</organismsDiffer>
    <experiments>2</experiments>
</comment>
<comment type="interaction">
    <interactant intactId="EBI-6896746">
        <id>O00429-3</id>
    </interactant>
    <interactant intactId="EBI-6447163">
        <id>Q8N7X4</id>
        <label>MAGEB6</label>
    </interactant>
    <organismsDiffer>false</organismsDiffer>
    <experiments>3</experiments>
</comment>
<comment type="interaction">
    <interactant intactId="EBI-6896746">
        <id>O00429-3</id>
    </interactant>
    <interactant intactId="EBI-719403">
        <id>O95563</id>
        <label>MPC2</label>
    </interactant>
    <organismsDiffer>false</organismsDiffer>
    <experiments>3</experiments>
</comment>
<comment type="interaction">
    <interactant intactId="EBI-6896746">
        <id>O00429-3</id>
    </interactant>
    <interactant intactId="EBI-25842075">
        <id>P21980-2</id>
        <label>TGM2</label>
    </interactant>
    <organismsDiffer>false</organismsDiffer>
    <experiments>3</experiments>
</comment>
<comment type="interaction">
    <interactant intactId="EBI-6896746">
        <id>O00429-3</id>
    </interactant>
    <interactant intactId="EBI-347522">
        <id>O43257</id>
        <label>ZNHIT1</label>
    </interactant>
    <organismsDiffer>false</organismsDiffer>
    <experiments>3</experiments>
</comment>
<comment type="interaction">
    <interactant intactId="EBI-4420450">
        <id>O00429-4</id>
    </interactant>
    <interactant intactId="EBI-4420450">
        <id>O00429-4</id>
        <label>DNM1L</label>
    </interactant>
    <organismsDiffer>false</organismsDiffer>
    <experiments>2</experiments>
</comment>
<comment type="subcellular location">
    <subcellularLocation>
        <location evidence="8 10 54">Cytoplasm</location>
        <location evidence="8 10 54">Cytosol</location>
    </subcellularLocation>
    <subcellularLocation>
        <location evidence="25 49 52">Golgi apparatus</location>
    </subcellularLocation>
    <subcellularLocation>
        <location evidence="8 49 51 52">Endomembrane system</location>
        <topology>Peripheral membrane protein</topology>
    </subcellularLocation>
    <subcellularLocation>
        <location evidence="36 39 40 43">Mitochondrion outer membrane</location>
        <topology>Peripheral membrane protein</topology>
    </subcellularLocation>
    <subcellularLocation>
        <location evidence="9 10">Peroxisome</location>
    </subcellularLocation>
    <subcellularLocation>
        <location evidence="2">Membrane</location>
        <location evidence="2">Clathrin-coated pit</location>
    </subcellularLocation>
    <subcellularLocation>
        <location evidence="2">Cytoplasmic vesicle</location>
        <location evidence="2">Secretory vesicle</location>
        <location evidence="2">Synaptic vesicle membrane</location>
    </subcellularLocation>
    <text evidence="1 3 11 18 28 50 52">Mainly cytosolic. Recruited by RALA and RALBP1 to mitochondrion during mitosis (PubMed:21822277). Translocated to the mitochondrial membrane through O-GlcNAcylation and interaction with FIS1. Colocalized with MARCHF5 at mitochondrial membrane (PubMed:17606867). Localizes to mitochondria at sites of division (PubMed:15208300). Localizes to mitochondria following necrosis induction. Recruited to the mitochondrial outer membrane by interaction with MIEF1. Mitochondrial recruitment is inhibited by C11orf65/MFI (By similarity). Associated with peroxisomal membranes, partly recruited there by PEX11B. May also be associated with endoplasmic reticulum tubules and cytoplasmic vesicles and found to be perinuclear (PubMed:9422767, PubMed:9570752). In some cell types, localizes to the Golgi complex (By similarity). Binds to phospholipid membranes (By similarity).</text>
</comment>
<comment type="alternative products">
    <event type="alternative splicing"/>
    <isoform>
        <id>O00429-1</id>
        <name>1</name>
        <name>HdynIV-WT</name>
        <name>DLP1F</name>
        <sequence type="displayed"/>
    </isoform>
    <isoform>
        <id>O00429-2</id>
        <name>4</name>
        <name>HdynIV-11</name>
        <name>DLP1c</name>
        <sequence type="described" ref="VSP_013688"/>
    </isoform>
    <isoform>
        <id>O00429-3</id>
        <name>2</name>
        <name>DLP1a</name>
        <sequence type="described" ref="VSP_013686"/>
    </isoform>
    <isoform>
        <id>O00429-4</id>
        <name>3</name>
        <name>HdynIV-37</name>
        <name>DLP1b</name>
        <sequence type="described" ref="VSP_013685"/>
    </isoform>
    <isoform>
        <id>O00429-5</id>
        <name>5</name>
        <name>HdynIV-26</name>
        <sequence type="described" ref="VSP_013687"/>
    </isoform>
    <isoform>
        <id>O00429-6</id>
        <name>6</name>
        <sequence type="described" ref="VSP_039097"/>
    </isoform>
    <isoform>
        <id>O00429-7</id>
        <name>7</name>
        <sequence type="described" ref="VSP_054544 VSP_054545"/>
    </isoform>
    <isoform>
        <id>O00429-8</id>
        <name>8</name>
        <sequence type="described" ref="VSP_039097 VSP_013688"/>
    </isoform>
    <isoform>
        <id>O00429-9</id>
        <name>9</name>
        <sequence type="described" ref="VSP_039097 VSP_013685"/>
    </isoform>
</comment>
<comment type="tissue specificity">
    <text evidence="7 50 52 53 54">Ubiquitously expressed with highest levels found in skeletal muscles, heart, kidney and brain. Isoform 1 is brain-specific. Isoform 2 and isoform 3 are predominantly expressed in testis and skeletal muscles respectively. Isoform 4 is weakly expressed in brain, heart and kidney. Isoform 5 is dominantly expressed in liver, heart and kidney. Isoform 6 is expressed in neurons.</text>
</comment>
<comment type="domain">
    <text evidence="11">The GED domain folds back to interact, in cis, with the GTP-binding domain and middle domain, and interacts, in trans, with the GED domains of other DNM1L molecules, and is thus critical for activating GTPase activity and for DNM1L dimerization.</text>
</comment>
<comment type="PTM">
    <text evidence="15 17 19 20 28 30 44 46 47 48">Phosphorylation/dephosphorylation events on two sites near the GED domain regulate mitochondrial fission (PubMed:17301055, PubMed:17553808, PubMed:18695047, PubMed:18838687, PubMed:23283981, PubMed:29478834, PubMed:33850055). Phosphorylation on Ser-637 by CAMK1 and PKA inhibits the GTPase activity, leading to a defect in mitochondrial fission promoting mitochondrial elongation (PubMed:17553808, PubMed:18695047, PubMed:23283981, PubMed:29478834). Dephosphorylated on this site by PPP3CA which promotes mitochondrial fission (PubMed:18838687). Phosphorylation on Ser-616 by CDK1 and PINK1 activates the GTPase activity and promotes mitochondrial fission (PubMed:18838687, PubMed:21822277, PubMed:32484300). Phosphorylated in a circadian manner at Ser-637 (PubMed:29478834). Dephosphorylated by PGAM5 (PubMed:32439975).</text>
</comment>
<comment type="PTM">
    <text evidence="22 23 24">Sumoylated on various lysine residues within the B domain, probably by MUL1. Sumoylation positively regulates mitochondrial fission. Desumoylated by SENP5 during G2/M transition of mitosis. Appears to be linked to its catalytic activity.</text>
</comment>
<comment type="PTM">
    <text evidence="21">S-nitrosylation increases DNM1L dimerization, mitochondrial fission and causes neuronal damage.</text>
</comment>
<comment type="PTM">
    <text evidence="12 13">Ubiquitination by MARCHF5 affects mitochondrial morphology.</text>
</comment>
<comment type="PTM">
    <text evidence="2">O-GlcNAcylation augments the level of the GTP-bound active form of DNM1L and induces translocation from the cytoplasm to mitochondria in cardiomyocytes. It also decreases phosphorylation at Ser-637 (By similarity).</text>
</comment>
<comment type="disease">
    <text evidence="21">May be associated with Alzheimer disease through amyloid-beta-induced increased S-nitrosylation of DNM1L, which triggers, directly or indirectly, excessive mitochondrial fission, synaptic loss and neuronal damage.</text>
</comment>
<comment type="disease" evidence="16 37 38 39 41 42 45">
    <disease id="DI-03357">
        <name>Encephalopathy due to defective mitochondrial and peroxisomal fission 1</name>
        <acronym>EMPF1</acronym>
        <description>A rare autosomal dominant systemic disorder resulting in lack of neurologic development and death in infancy. After birth, infants present in the first week of life with poor feeding and neurologic impairment, including hypotonia, little spontaneous movement, no tendon reflexes, no response to light stimulation, and poor visual fixation. Other features include mildly elevated plasma concentration of very-long-chain fatty acids, lactic acidosis, microcephaly, deep-set eyes, optic atrophy and hypoplasia, and an abnormal gyral pattern in both frontal lobes associated with dysmyelination.</description>
        <dbReference type="MIM" id="614388"/>
    </disease>
    <text>The disease is caused by variants affecting the gene represented in this entry.</text>
</comment>
<comment type="disease" evidence="43">
    <disease id="DI-05126">
        <name>Optic atrophy 5</name>
        <acronym>OPA5</acronym>
        <description>A form of optic atrophy, a disease characterized by progressive visual loss in association with a deficiency in the number of nerve fibers which arise in the retina and converge to form the optic disk, optic nerve, optic chiasm and optic tracts. OPA5 is an autosomal dominant non-syndromic form that manifests as slowly progressive visual loss with variable onset from the first to third decades. Additional ocular abnormalities may include central scotoma and dyschromatopsia.</description>
        <dbReference type="MIM" id="610708"/>
    </disease>
    <text>The disease is caused by variants affecting the gene represented in this entry.</text>
</comment>
<comment type="similarity">
    <text evidence="5">Belongs to the TRAFAC class dynamin-like GTPase superfamily. Dynamin/Fzo/YdjA family.</text>
</comment>
<comment type="sequence caution" evidence="60">
    <conflict type="erroneous initiation">
        <sequence resource="EMBL-CDS" id="BAD92307"/>
    </conflict>
    <text>Extended N-terminus.</text>
</comment>
<dbReference type="EC" id="3.6.5.5" evidence="35 50"/>
<dbReference type="EMBL" id="AB006965">
    <property type="protein sequence ID" value="BAA22193.1"/>
    <property type="molecule type" value="mRNA"/>
</dbReference>
<dbReference type="EMBL" id="AF061795">
    <property type="protein sequence ID" value="AAC35283.1"/>
    <property type="molecule type" value="mRNA"/>
</dbReference>
<dbReference type="EMBL" id="AF000430">
    <property type="protein sequence ID" value="AAC23724.1"/>
    <property type="molecule type" value="mRNA"/>
</dbReference>
<dbReference type="EMBL" id="AF151685">
    <property type="protein sequence ID" value="AAD39541.1"/>
    <property type="molecule type" value="mRNA"/>
</dbReference>
<dbReference type="EMBL" id="AK299926">
    <property type="protein sequence ID" value="BAG61760.1"/>
    <property type="molecule type" value="mRNA"/>
</dbReference>
<dbReference type="EMBL" id="AK291094">
    <property type="protein sequence ID" value="BAF83783.1"/>
    <property type="molecule type" value="mRNA"/>
</dbReference>
<dbReference type="EMBL" id="AK294533">
    <property type="protein sequence ID" value="BAG57740.1"/>
    <property type="molecule type" value="mRNA"/>
</dbReference>
<dbReference type="EMBL" id="AB209070">
    <property type="protein sequence ID" value="BAD92307.1"/>
    <property type="status" value="ALT_INIT"/>
    <property type="molecule type" value="mRNA"/>
</dbReference>
<dbReference type="EMBL" id="AC084824">
    <property type="status" value="NOT_ANNOTATED_CDS"/>
    <property type="molecule type" value="Genomic_DNA"/>
</dbReference>
<dbReference type="EMBL" id="AC087588">
    <property type="status" value="NOT_ANNOTATED_CDS"/>
    <property type="molecule type" value="Genomic_DNA"/>
</dbReference>
<dbReference type="EMBL" id="BC024590">
    <property type="protein sequence ID" value="AAH24590.1"/>
    <property type="molecule type" value="mRNA"/>
</dbReference>
<dbReference type="CCDS" id="CCDS61095.1">
    <molecule id="O00429-6"/>
</dbReference>
<dbReference type="CCDS" id="CCDS61096.1">
    <molecule id="O00429-8"/>
</dbReference>
<dbReference type="CCDS" id="CCDS61098.1">
    <molecule id="O00429-2"/>
</dbReference>
<dbReference type="CCDS" id="CCDS81680.1">
    <molecule id="O00429-9"/>
</dbReference>
<dbReference type="CCDS" id="CCDS8728.1">
    <molecule id="O00429-4"/>
</dbReference>
<dbReference type="CCDS" id="CCDS8729.1">
    <molecule id="O00429-1"/>
</dbReference>
<dbReference type="CCDS" id="CCDS8730.1">
    <molecule id="O00429-3"/>
</dbReference>
<dbReference type="PIR" id="JC5695">
    <property type="entry name" value="JC5695"/>
</dbReference>
<dbReference type="RefSeq" id="NP_001265392.1">
    <molecule id="O00429-2"/>
    <property type="nucleotide sequence ID" value="NM_001278463.2"/>
</dbReference>
<dbReference type="RefSeq" id="NP_001265393.1">
    <molecule id="O00429-6"/>
    <property type="nucleotide sequence ID" value="NM_001278464.2"/>
</dbReference>
<dbReference type="RefSeq" id="NP_001265394.1">
    <molecule id="O00429-8"/>
    <property type="nucleotide sequence ID" value="NM_001278465.2"/>
</dbReference>
<dbReference type="RefSeq" id="NP_001265395.1">
    <molecule id="O00429-7"/>
    <property type="nucleotide sequence ID" value="NM_001278466.2"/>
</dbReference>
<dbReference type="RefSeq" id="NP_001317309.1">
    <molecule id="O00429-9"/>
    <property type="nucleotide sequence ID" value="NM_001330380.2"/>
</dbReference>
<dbReference type="RefSeq" id="NP_005681.2">
    <molecule id="O00429-4"/>
    <property type="nucleotide sequence ID" value="NM_005690.5"/>
</dbReference>
<dbReference type="RefSeq" id="NP_036192.2">
    <molecule id="O00429-1"/>
    <property type="nucleotide sequence ID" value="NM_012062.5"/>
</dbReference>
<dbReference type="RefSeq" id="NP_036193.2">
    <molecule id="O00429-3"/>
    <property type="nucleotide sequence ID" value="NM_012063.4"/>
</dbReference>
<dbReference type="PDB" id="3W6N">
    <property type="method" value="X-ray"/>
    <property type="resolution" value="2.00 A"/>
    <property type="chains" value="A/B=1-329, A/B=709-736"/>
</dbReference>
<dbReference type="PDB" id="3W6O">
    <property type="method" value="X-ray"/>
    <property type="resolution" value="1.90 A"/>
    <property type="chains" value="A/B=1-329, A/B=709-736"/>
</dbReference>
<dbReference type="PDB" id="3W6P">
    <property type="method" value="X-ray"/>
    <property type="resolution" value="1.70 A"/>
    <property type="chains" value="A/B=1-329, A/B=709-736"/>
</dbReference>
<dbReference type="PDB" id="4BEJ">
    <property type="method" value="X-ray"/>
    <property type="resolution" value="3.48 A"/>
    <property type="chains" value="A/B/C/D=1-736"/>
</dbReference>
<dbReference type="PDB" id="4H1U">
    <property type="method" value="X-ray"/>
    <property type="resolution" value="2.30 A"/>
    <property type="chains" value="A=1-327, A=711-736"/>
</dbReference>
<dbReference type="PDB" id="4H1V">
    <property type="method" value="X-ray"/>
    <property type="resolution" value="2.30 A"/>
    <property type="chains" value="A=1-327, A=711-736"/>
</dbReference>
<dbReference type="PDB" id="5WP9">
    <property type="method" value="EM"/>
    <property type="resolution" value="4.22 A"/>
    <property type="chains" value="A/C/E/G/I/K/M/O=1-736"/>
</dbReference>
<dbReference type="PDB" id="8T1H">
    <property type="method" value="EM"/>
    <property type="resolution" value="5.97 A"/>
    <property type="chains" value="A/B=1-736"/>
</dbReference>
<dbReference type="PDBsum" id="3W6N"/>
<dbReference type="PDBsum" id="3W6O"/>
<dbReference type="PDBsum" id="3W6P"/>
<dbReference type="PDBsum" id="4BEJ"/>
<dbReference type="PDBsum" id="4H1U"/>
<dbReference type="PDBsum" id="4H1V"/>
<dbReference type="PDBsum" id="5WP9"/>
<dbReference type="PDBsum" id="8T1H"/>
<dbReference type="EMDB" id="EMD-40967"/>
<dbReference type="EMDB" id="EMD-8874"/>
<dbReference type="SMR" id="O00429"/>
<dbReference type="BioGRID" id="115370">
    <property type="interactions" value="371"/>
</dbReference>
<dbReference type="CORUM" id="O00429"/>
<dbReference type="DIP" id="DIP-42704N"/>
<dbReference type="FunCoup" id="O00429">
    <property type="interactions" value="4592"/>
</dbReference>
<dbReference type="IntAct" id="O00429">
    <property type="interactions" value="257"/>
</dbReference>
<dbReference type="MINT" id="O00429"/>
<dbReference type="STRING" id="9606.ENSP00000449089"/>
<dbReference type="BindingDB" id="O00429"/>
<dbReference type="ChEMBL" id="CHEMBL4523118"/>
<dbReference type="TCDB" id="1.N.6.1.2">
    <property type="family name" value="the mitochondrial inner/outer membrane fusion (mmf) family"/>
</dbReference>
<dbReference type="GlyCosmos" id="O00429">
    <property type="glycosylation" value="4 sites, 1 glycan"/>
</dbReference>
<dbReference type="GlyGen" id="O00429">
    <property type="glycosylation" value="5 sites, 1 O-linked glycan (2 sites)"/>
</dbReference>
<dbReference type="iPTMnet" id="O00429"/>
<dbReference type="MetOSite" id="O00429"/>
<dbReference type="PhosphoSitePlus" id="O00429"/>
<dbReference type="SwissPalm" id="O00429"/>
<dbReference type="BioMuta" id="DNM1L"/>
<dbReference type="CPTAC" id="CPTAC-57"/>
<dbReference type="jPOST" id="O00429"/>
<dbReference type="MassIVE" id="O00429"/>
<dbReference type="PaxDb" id="9606-ENSP00000449089"/>
<dbReference type="PeptideAtlas" id="O00429"/>
<dbReference type="ProteomicsDB" id="34194"/>
<dbReference type="ProteomicsDB" id="4122"/>
<dbReference type="ProteomicsDB" id="47884">
    <molecule id="O00429-1"/>
</dbReference>
<dbReference type="ProteomicsDB" id="47885">
    <molecule id="O00429-2"/>
</dbReference>
<dbReference type="ProteomicsDB" id="47886">
    <molecule id="O00429-3"/>
</dbReference>
<dbReference type="ProteomicsDB" id="47887">
    <molecule id="O00429-4"/>
</dbReference>
<dbReference type="ProteomicsDB" id="47888">
    <molecule id="O00429-5"/>
</dbReference>
<dbReference type="ProteomicsDB" id="47889">
    <molecule id="O00429-6"/>
</dbReference>
<dbReference type="Pumba" id="O00429"/>
<dbReference type="Antibodypedia" id="4096">
    <property type="antibodies" value="731 antibodies from 38 providers"/>
</dbReference>
<dbReference type="DNASU" id="10059"/>
<dbReference type="Ensembl" id="ENST00000266481.10">
    <molecule id="O00429-4"/>
    <property type="protein sequence ID" value="ENSP00000266481.6"/>
    <property type="gene ID" value="ENSG00000087470.21"/>
</dbReference>
<dbReference type="Ensembl" id="ENST00000358214.9">
    <molecule id="O00429-9"/>
    <property type="protein sequence ID" value="ENSP00000350948.5"/>
    <property type="gene ID" value="ENSG00000087470.21"/>
</dbReference>
<dbReference type="Ensembl" id="ENST00000381000.8">
    <molecule id="O00429-8"/>
    <property type="protein sequence ID" value="ENSP00000370388.4"/>
    <property type="gene ID" value="ENSG00000087470.21"/>
</dbReference>
<dbReference type="Ensembl" id="ENST00000452533.6">
    <molecule id="O00429-3"/>
    <property type="protein sequence ID" value="ENSP00000415131.2"/>
    <property type="gene ID" value="ENSG00000087470.21"/>
</dbReference>
<dbReference type="Ensembl" id="ENST00000547312.5">
    <molecule id="O00429-2"/>
    <property type="protein sequence ID" value="ENSP00000448610.1"/>
    <property type="gene ID" value="ENSG00000087470.21"/>
</dbReference>
<dbReference type="Ensembl" id="ENST00000549701.6">
    <molecule id="O00429-1"/>
    <property type="protein sequence ID" value="ENSP00000450399.1"/>
    <property type="gene ID" value="ENSG00000087470.21"/>
</dbReference>
<dbReference type="Ensembl" id="ENST00000553257.6">
    <molecule id="O00429-6"/>
    <property type="protein sequence ID" value="ENSP00000449089.1"/>
    <property type="gene ID" value="ENSG00000087470.21"/>
</dbReference>
<dbReference type="GeneID" id="10059"/>
<dbReference type="KEGG" id="hsa:10059"/>
<dbReference type="MANE-Select" id="ENST00000549701.6">
    <property type="protein sequence ID" value="ENSP00000450399.1"/>
    <property type="RefSeq nucleotide sequence ID" value="NM_012062.5"/>
    <property type="RefSeq protein sequence ID" value="NP_036192.2"/>
</dbReference>
<dbReference type="UCSC" id="uc001rld.4">
    <molecule id="O00429-1"/>
    <property type="organism name" value="human"/>
</dbReference>
<dbReference type="AGR" id="HGNC:2973"/>
<dbReference type="CTD" id="10059"/>
<dbReference type="DisGeNET" id="10059"/>
<dbReference type="GeneCards" id="DNM1L"/>
<dbReference type="HGNC" id="HGNC:2973">
    <property type="gene designation" value="DNM1L"/>
</dbReference>
<dbReference type="HPA" id="ENSG00000087470">
    <property type="expression patterns" value="Low tissue specificity"/>
</dbReference>
<dbReference type="MalaCards" id="DNM1L"/>
<dbReference type="MIM" id="603850">
    <property type="type" value="gene"/>
</dbReference>
<dbReference type="MIM" id="610708">
    <property type="type" value="phenotype"/>
</dbReference>
<dbReference type="MIM" id="614388">
    <property type="type" value="phenotype"/>
</dbReference>
<dbReference type="neXtProt" id="NX_O00429"/>
<dbReference type="OpenTargets" id="ENSG00000087470"/>
<dbReference type="Orphanet" id="98673">
    <property type="disease" value="Autosomal dominant optic atrophy, classic form"/>
</dbReference>
<dbReference type="Orphanet" id="330050">
    <property type="disease" value="DNM1L-related encephalopathy due to mitochondrial and peroxisomal fission defect"/>
</dbReference>
<dbReference type="PharmGKB" id="PA27441"/>
<dbReference type="VEuPathDB" id="HostDB:ENSG00000087470"/>
<dbReference type="eggNOG" id="KOG0446">
    <property type="taxonomic scope" value="Eukaryota"/>
</dbReference>
<dbReference type="GeneTree" id="ENSGT00940000155504"/>
<dbReference type="HOGENOM" id="CLU_008964_5_4_1"/>
<dbReference type="InParanoid" id="O00429"/>
<dbReference type="OMA" id="KICHNCG"/>
<dbReference type="OrthoDB" id="5061070at2759"/>
<dbReference type="PAN-GO" id="O00429">
    <property type="GO annotations" value="8 GO annotations based on evolutionary models"/>
</dbReference>
<dbReference type="PhylomeDB" id="O00429"/>
<dbReference type="TreeFam" id="TF352031"/>
<dbReference type="BRENDA" id="3.6.5.5">
    <property type="organism ID" value="2681"/>
</dbReference>
<dbReference type="PathwayCommons" id="O00429"/>
<dbReference type="Reactome" id="R-HSA-75153">
    <property type="pathway name" value="Apoptotic execution phase"/>
</dbReference>
<dbReference type="SignaLink" id="O00429"/>
<dbReference type="SIGNOR" id="O00429"/>
<dbReference type="BioGRID-ORCS" id="10059">
    <property type="hits" value="516 hits in 1170 CRISPR screens"/>
</dbReference>
<dbReference type="CD-CODE" id="FB4E32DD">
    <property type="entry name" value="Presynaptic clusters and postsynaptic densities"/>
</dbReference>
<dbReference type="ChiTaRS" id="DNM1L">
    <property type="organism name" value="human"/>
</dbReference>
<dbReference type="EvolutionaryTrace" id="O00429"/>
<dbReference type="GeneWiki" id="DNM1L"/>
<dbReference type="GenomeRNAi" id="10059"/>
<dbReference type="Pharos" id="O00429">
    <property type="development level" value="Tchem"/>
</dbReference>
<dbReference type="PRO" id="PR:O00429"/>
<dbReference type="Proteomes" id="UP000005640">
    <property type="component" value="Chromosome 12"/>
</dbReference>
<dbReference type="RNAct" id="O00429">
    <property type="molecule type" value="protein"/>
</dbReference>
<dbReference type="Bgee" id="ENSG00000087470">
    <property type="expression patterns" value="Expressed in lateral nuclear group of thalamus and 209 other cell types or tissues"/>
</dbReference>
<dbReference type="ExpressionAtlas" id="O00429">
    <property type="expression patterns" value="baseline and differential"/>
</dbReference>
<dbReference type="GO" id="GO:0005903">
    <property type="term" value="C:brush border"/>
    <property type="evidence" value="ECO:0007669"/>
    <property type="project" value="Ensembl"/>
</dbReference>
<dbReference type="GO" id="GO:0005905">
    <property type="term" value="C:clathrin-coated pit"/>
    <property type="evidence" value="ECO:0007669"/>
    <property type="project" value="UniProtKB-SubCell"/>
</dbReference>
<dbReference type="GO" id="GO:0005737">
    <property type="term" value="C:cytoplasm"/>
    <property type="evidence" value="ECO:0000314"/>
    <property type="project" value="UniProtKB"/>
</dbReference>
<dbReference type="GO" id="GO:0005829">
    <property type="term" value="C:cytosol"/>
    <property type="evidence" value="ECO:0000314"/>
    <property type="project" value="HPA"/>
</dbReference>
<dbReference type="GO" id="GO:0005783">
    <property type="term" value="C:endoplasmic reticulum"/>
    <property type="evidence" value="ECO:0000314"/>
    <property type="project" value="ParkinsonsUK-UCL"/>
</dbReference>
<dbReference type="GO" id="GO:0005789">
    <property type="term" value="C:endoplasmic reticulum membrane"/>
    <property type="evidence" value="ECO:0000304"/>
    <property type="project" value="ParkinsonsUK-UCL"/>
</dbReference>
<dbReference type="GO" id="GO:0005794">
    <property type="term" value="C:Golgi apparatus"/>
    <property type="evidence" value="ECO:0000314"/>
    <property type="project" value="UniProtKB"/>
</dbReference>
<dbReference type="GO" id="GO:0043231">
    <property type="term" value="C:intracellular membrane-bounded organelle"/>
    <property type="evidence" value="ECO:0000314"/>
    <property type="project" value="HPA"/>
</dbReference>
<dbReference type="GO" id="GO:0016020">
    <property type="term" value="C:membrane"/>
    <property type="evidence" value="ECO:0007005"/>
    <property type="project" value="UniProtKB"/>
</dbReference>
<dbReference type="GO" id="GO:0005874">
    <property type="term" value="C:microtubule"/>
    <property type="evidence" value="ECO:0000314"/>
    <property type="project" value="UniProtKB"/>
</dbReference>
<dbReference type="GO" id="GO:0005741">
    <property type="term" value="C:mitochondrial outer membrane"/>
    <property type="evidence" value="ECO:0000314"/>
    <property type="project" value="UniProtKB"/>
</dbReference>
<dbReference type="GO" id="GO:0005739">
    <property type="term" value="C:mitochondrion"/>
    <property type="evidence" value="ECO:0000314"/>
    <property type="project" value="UniProtKB"/>
</dbReference>
<dbReference type="GO" id="GO:0048471">
    <property type="term" value="C:perinuclear region of cytoplasm"/>
    <property type="evidence" value="ECO:0000314"/>
    <property type="project" value="UniProtKB"/>
</dbReference>
<dbReference type="GO" id="GO:0005777">
    <property type="term" value="C:peroxisome"/>
    <property type="evidence" value="ECO:0000314"/>
    <property type="project" value="UniProtKB"/>
</dbReference>
<dbReference type="GO" id="GO:0032991">
    <property type="term" value="C:protein-containing complex"/>
    <property type="evidence" value="ECO:0000314"/>
    <property type="project" value="UniProtKB"/>
</dbReference>
<dbReference type="GO" id="GO:0030672">
    <property type="term" value="C:synaptic vesicle membrane"/>
    <property type="evidence" value="ECO:0007669"/>
    <property type="project" value="UniProtKB-SubCell"/>
</dbReference>
<dbReference type="GO" id="GO:0005525">
    <property type="term" value="F:GTP binding"/>
    <property type="evidence" value="ECO:0007669"/>
    <property type="project" value="UniProtKB-KW"/>
</dbReference>
<dbReference type="GO" id="GO:0030742">
    <property type="term" value="F:GTP-dependent protein binding"/>
    <property type="evidence" value="ECO:0000314"/>
    <property type="project" value="ParkinsonsUK-UCL"/>
</dbReference>
<dbReference type="GO" id="GO:0005096">
    <property type="term" value="F:GTPase activator activity"/>
    <property type="evidence" value="ECO:0000305"/>
    <property type="project" value="ParkinsonsUK-UCL"/>
</dbReference>
<dbReference type="GO" id="GO:0003924">
    <property type="term" value="F:GTPase activity"/>
    <property type="evidence" value="ECO:0000314"/>
    <property type="project" value="UniProtKB"/>
</dbReference>
<dbReference type="GO" id="GO:0042802">
    <property type="term" value="F:identical protein binding"/>
    <property type="evidence" value="ECO:0000353"/>
    <property type="project" value="IntAct"/>
</dbReference>
<dbReference type="GO" id="GO:0008289">
    <property type="term" value="F:lipid binding"/>
    <property type="evidence" value="ECO:0007669"/>
    <property type="project" value="UniProtKB-KW"/>
</dbReference>
<dbReference type="GO" id="GO:0008017">
    <property type="term" value="F:microtubule binding"/>
    <property type="evidence" value="ECO:0000318"/>
    <property type="project" value="GO_Central"/>
</dbReference>
<dbReference type="GO" id="GO:0042803">
    <property type="term" value="F:protein homodimerization activity"/>
    <property type="evidence" value="ECO:0000314"/>
    <property type="project" value="UniProtKB"/>
</dbReference>
<dbReference type="GO" id="GO:0031267">
    <property type="term" value="F:small GTPase binding"/>
    <property type="evidence" value="ECO:0000314"/>
    <property type="project" value="ParkinsonsUK-UCL"/>
</dbReference>
<dbReference type="GO" id="GO:0031625">
    <property type="term" value="F:ubiquitin protein ligase binding"/>
    <property type="evidence" value="ECO:0000353"/>
    <property type="project" value="UniProtKB"/>
</dbReference>
<dbReference type="GO" id="GO:0006816">
    <property type="term" value="P:calcium ion transport"/>
    <property type="evidence" value="ECO:0007669"/>
    <property type="project" value="Ensembl"/>
</dbReference>
<dbReference type="GO" id="GO:0006897">
    <property type="term" value="P:endocytosis"/>
    <property type="evidence" value="ECO:0000318"/>
    <property type="project" value="GO_Central"/>
</dbReference>
<dbReference type="GO" id="GO:0060047">
    <property type="term" value="P:heart contraction"/>
    <property type="evidence" value="ECO:0007669"/>
    <property type="project" value="Ensembl"/>
</dbReference>
<dbReference type="GO" id="GO:0048312">
    <property type="term" value="P:intracellular distribution of mitochondria"/>
    <property type="evidence" value="ECO:0000315"/>
    <property type="project" value="ParkinsonsUK-UCL"/>
</dbReference>
<dbReference type="GO" id="GO:0000266">
    <property type="term" value="P:mitochondrial fission"/>
    <property type="evidence" value="ECO:0000314"/>
    <property type="project" value="UniProtKB"/>
</dbReference>
<dbReference type="GO" id="GO:0043653">
    <property type="term" value="P:mitochondrial fragmentation involved in apoptotic process"/>
    <property type="evidence" value="ECO:0000315"/>
    <property type="project" value="HGNC-UCL"/>
</dbReference>
<dbReference type="GO" id="GO:0090149">
    <property type="term" value="P:mitochondrial membrane fission"/>
    <property type="evidence" value="ECO:0000314"/>
    <property type="project" value="UniProtKB"/>
</dbReference>
<dbReference type="GO" id="GO:0007005">
    <property type="term" value="P:mitochondrion organization"/>
    <property type="evidence" value="ECO:0000315"/>
    <property type="project" value="ParkinsonsUK-UCL"/>
</dbReference>
<dbReference type="GO" id="GO:0160040">
    <property type="term" value="P:mitocytosis"/>
    <property type="evidence" value="ECO:0007669"/>
    <property type="project" value="Ensembl"/>
</dbReference>
<dbReference type="GO" id="GO:0016559">
    <property type="term" value="P:peroxisome fission"/>
    <property type="evidence" value="ECO:0000314"/>
    <property type="project" value="UniProtKB"/>
</dbReference>
<dbReference type="GO" id="GO:0090141">
    <property type="term" value="P:positive regulation of mitochondrial fission"/>
    <property type="evidence" value="ECO:0000315"/>
    <property type="project" value="ParkinsonsUK-UCL"/>
</dbReference>
<dbReference type="GO" id="GO:0090023">
    <property type="term" value="P:positive regulation of neutrophil chemotaxis"/>
    <property type="evidence" value="ECO:0000315"/>
    <property type="project" value="CACAO"/>
</dbReference>
<dbReference type="GO" id="GO:0050714">
    <property type="term" value="P:positive regulation of protein secretion"/>
    <property type="evidence" value="ECO:0000314"/>
    <property type="project" value="UniProtKB"/>
</dbReference>
<dbReference type="GO" id="GO:0051259">
    <property type="term" value="P:protein complex oligomerization"/>
    <property type="evidence" value="ECO:0000315"/>
    <property type="project" value="UniProtKB"/>
</dbReference>
<dbReference type="GO" id="GO:0070585">
    <property type="term" value="P:protein localization to mitochondrion"/>
    <property type="evidence" value="ECO:0000315"/>
    <property type="project" value="DisProt"/>
</dbReference>
<dbReference type="GO" id="GO:1903578">
    <property type="term" value="P:regulation of ATP metabolic process"/>
    <property type="evidence" value="ECO:0007669"/>
    <property type="project" value="Ensembl"/>
</dbReference>
<dbReference type="GO" id="GO:0010468">
    <property type="term" value="P:regulation of gene expression"/>
    <property type="evidence" value="ECO:0007669"/>
    <property type="project" value="Ensembl"/>
</dbReference>
<dbReference type="GO" id="GO:1901524">
    <property type="term" value="P:regulation of mitophagy"/>
    <property type="evidence" value="ECO:0000316"/>
    <property type="project" value="ParkinsonsUK-UCL"/>
</dbReference>
<dbReference type="GO" id="GO:1900063">
    <property type="term" value="P:regulation of peroxisome organization"/>
    <property type="evidence" value="ECO:0007669"/>
    <property type="project" value="Ensembl"/>
</dbReference>
<dbReference type="GO" id="GO:0048511">
    <property type="term" value="P:rhythmic process"/>
    <property type="evidence" value="ECO:0007669"/>
    <property type="project" value="UniProtKB-KW"/>
</dbReference>
<dbReference type="CDD" id="cd08771">
    <property type="entry name" value="DLP_1"/>
    <property type="match status" value="1"/>
</dbReference>
<dbReference type="DisProt" id="DP01537">
    <molecule id="O00429-3"/>
</dbReference>
<dbReference type="FunFam" id="1.20.120.1240:FF:000034">
    <property type="entry name" value="Dynamin 1 like"/>
    <property type="match status" value="1"/>
</dbReference>
<dbReference type="FunFam" id="1.20.120.1240:FF:000006">
    <property type="entry name" value="Dynamin-1-like protein isoform 1"/>
    <property type="match status" value="1"/>
</dbReference>
<dbReference type="FunFam" id="3.40.50.300:FF:000172">
    <property type="entry name" value="Dynamin-1-like protein isoform 1"/>
    <property type="match status" value="1"/>
</dbReference>
<dbReference type="Gene3D" id="1.20.120.1240">
    <property type="entry name" value="Dynamin, middle domain"/>
    <property type="match status" value="2"/>
</dbReference>
<dbReference type="Gene3D" id="3.40.50.300">
    <property type="entry name" value="P-loop containing nucleotide triphosphate hydrolases"/>
    <property type="match status" value="1"/>
</dbReference>
<dbReference type="InterPro" id="IPR022812">
    <property type="entry name" value="Dynamin"/>
</dbReference>
<dbReference type="InterPro" id="IPR001401">
    <property type="entry name" value="Dynamin_GTPase"/>
</dbReference>
<dbReference type="InterPro" id="IPR019762">
    <property type="entry name" value="Dynamin_GTPase_CS"/>
</dbReference>
<dbReference type="InterPro" id="IPR045063">
    <property type="entry name" value="Dynamin_N"/>
</dbReference>
<dbReference type="InterPro" id="IPR000375">
    <property type="entry name" value="Dynamin_stalk"/>
</dbReference>
<dbReference type="InterPro" id="IPR030381">
    <property type="entry name" value="G_DYNAMIN_dom"/>
</dbReference>
<dbReference type="InterPro" id="IPR003130">
    <property type="entry name" value="GED"/>
</dbReference>
<dbReference type="InterPro" id="IPR020850">
    <property type="entry name" value="GED_dom"/>
</dbReference>
<dbReference type="InterPro" id="IPR027417">
    <property type="entry name" value="P-loop_NTPase"/>
</dbReference>
<dbReference type="PANTHER" id="PTHR11566">
    <property type="entry name" value="DYNAMIN"/>
    <property type="match status" value="1"/>
</dbReference>
<dbReference type="PANTHER" id="PTHR11566:SF39">
    <property type="entry name" value="DYNAMIN-1-LIKE PROTEIN"/>
    <property type="match status" value="1"/>
</dbReference>
<dbReference type="Pfam" id="PF01031">
    <property type="entry name" value="Dynamin_M"/>
    <property type="match status" value="1"/>
</dbReference>
<dbReference type="Pfam" id="PF00350">
    <property type="entry name" value="Dynamin_N"/>
    <property type="match status" value="1"/>
</dbReference>
<dbReference type="Pfam" id="PF02212">
    <property type="entry name" value="GED"/>
    <property type="match status" value="1"/>
</dbReference>
<dbReference type="PRINTS" id="PR00195">
    <property type="entry name" value="DYNAMIN"/>
</dbReference>
<dbReference type="SMART" id="SM00053">
    <property type="entry name" value="DYNc"/>
    <property type="match status" value="1"/>
</dbReference>
<dbReference type="SMART" id="SM00302">
    <property type="entry name" value="GED"/>
    <property type="match status" value="1"/>
</dbReference>
<dbReference type="SUPFAM" id="SSF52540">
    <property type="entry name" value="P-loop containing nucleoside triphosphate hydrolases"/>
    <property type="match status" value="1"/>
</dbReference>
<dbReference type="PROSITE" id="PS00410">
    <property type="entry name" value="G_DYNAMIN_1"/>
    <property type="match status" value="1"/>
</dbReference>
<dbReference type="PROSITE" id="PS51718">
    <property type="entry name" value="G_DYNAMIN_2"/>
    <property type="match status" value="1"/>
</dbReference>
<dbReference type="PROSITE" id="PS51388">
    <property type="entry name" value="GED"/>
    <property type="match status" value="1"/>
</dbReference>